<proteinExistence type="evidence at protein level"/>
<reference key="1">
    <citation type="journal article" date="1981" name="Eur. J. Biochem.">
        <title>The primary structure of Escherichia coli RNA polymerase. Nucleotide sequence of the rpoB gene and amino-acid sequence of the beta-subunit.</title>
        <authorList>
            <person name="Ovchinnikov Y.A."/>
            <person name="Monastyrskaya G.S."/>
            <person name="Gubanov V.V."/>
            <person name="Guryev S.O."/>
            <person name="Chertov O.Y."/>
            <person name="Modyanov N.N."/>
            <person name="Grinkevich V.A."/>
            <person name="Makarova I.A."/>
            <person name="Marchenko T.V."/>
            <person name="Polovnikova I.N."/>
            <person name="Lipkin V.M."/>
            <person name="Sverdlov E.D."/>
        </authorList>
    </citation>
    <scope>NUCLEOTIDE SEQUENCE [GENOMIC DNA]</scope>
</reference>
<reference key="2">
    <citation type="submission" date="1996-11" db="EMBL/GenBank/DDBJ databases">
        <authorList>
            <person name="Miller E.S."/>
            <person name="Shih G.C."/>
            <person name="Chung S.K."/>
            <person name="Ballard D.N."/>
        </authorList>
    </citation>
    <scope>NUCLEOTIDE SEQUENCE [GENOMIC DNA]</scope>
    <source>
        <strain>B</strain>
    </source>
</reference>
<reference key="3">
    <citation type="journal article" date="1993" name="Nucleic Acids Res.">
        <title>Analysis of the Escherichia coli genome. IV. DNA sequence of the region from 89.2 to 92.8 minutes.</title>
        <authorList>
            <person name="Blattner F.R."/>
            <person name="Burland V.D."/>
            <person name="Plunkett G. III"/>
            <person name="Sofia H.J."/>
            <person name="Daniels D.L."/>
        </authorList>
    </citation>
    <scope>NUCLEOTIDE SEQUENCE [LARGE SCALE GENOMIC DNA]</scope>
    <source>
        <strain>K12 / MG1655 / ATCC 47076</strain>
    </source>
</reference>
<reference key="4">
    <citation type="journal article" date="1997" name="Science">
        <title>The complete genome sequence of Escherichia coli K-12.</title>
        <authorList>
            <person name="Blattner F.R."/>
            <person name="Plunkett G. III"/>
            <person name="Bloch C.A."/>
            <person name="Perna N.T."/>
            <person name="Burland V."/>
            <person name="Riley M."/>
            <person name="Collado-Vides J."/>
            <person name="Glasner J.D."/>
            <person name="Rode C.K."/>
            <person name="Mayhew G.F."/>
            <person name="Gregor J."/>
            <person name="Davis N.W."/>
            <person name="Kirkpatrick H.A."/>
            <person name="Goeden M.A."/>
            <person name="Rose D.J."/>
            <person name="Mau B."/>
            <person name="Shao Y."/>
        </authorList>
    </citation>
    <scope>NUCLEOTIDE SEQUENCE [LARGE SCALE GENOMIC DNA]</scope>
    <source>
        <strain>K12 / MG1655 / ATCC 47076</strain>
    </source>
</reference>
<reference key="5">
    <citation type="journal article" date="2006" name="Mol. Syst. Biol.">
        <title>Highly accurate genome sequences of Escherichia coli K-12 strains MG1655 and W3110.</title>
        <authorList>
            <person name="Hayashi K."/>
            <person name="Morooka N."/>
            <person name="Yamamoto Y."/>
            <person name="Fujita K."/>
            <person name="Isono K."/>
            <person name="Choi S."/>
            <person name="Ohtsubo E."/>
            <person name="Baba T."/>
            <person name="Wanner B.L."/>
            <person name="Mori H."/>
            <person name="Horiuchi T."/>
        </authorList>
    </citation>
    <scope>NUCLEOTIDE SEQUENCE [LARGE SCALE GENOMIC DNA]</scope>
    <source>
        <strain>K12 / W3110 / ATCC 27325 / DSM 5911</strain>
    </source>
</reference>
<reference key="6">
    <citation type="journal article" date="1980" name="Gene">
        <title>Nucleotide sequence of the proximal portion of the RNA polymerase beta subunit gene of Escherichia coli.</title>
        <authorList>
            <person name="Delcuve G."/>
            <person name="Downing W."/>
            <person name="Lewis H."/>
            <person name="Dennis P.P."/>
        </authorList>
    </citation>
    <scope>NUCLEOTIDE SEQUENCE [GENOMIC DNA] OF 1-391</scope>
</reference>
<reference key="7">
    <citation type="journal article" date="1979" name="Bioorg. Khim.">
        <title>The nucleotide sequence at the proximal end of rpoB gene of Escherichia coli.</title>
        <authorList>
            <person name="Gurevich A.I."/>
            <person name="Avakov A.E."/>
            <person name="Kolosov M.N."/>
        </authorList>
    </citation>
    <scope>NUCLEOTIDE SEQUENCE [GENOMIC DNA] OF 1-188</scope>
</reference>
<reference key="8">
    <citation type="journal article" date="1980" name="Bioorg. Khim.">
        <title>Primary structure of RNA polymerase from E.coli: nucleotide sequence of the rpoB gene fragment and corresponding N-terminal amino acid sequence of the beta-subunit.</title>
        <authorList>
            <person name="Monastyrskaya G.S."/>
            <person name="Gubanov V.V."/>
            <person name="Guryev S.O."/>
            <person name="Lipkin V.M."/>
            <person name="Sverdlov E.D."/>
        </authorList>
    </citation>
    <scope>NUCLEOTIDE SEQUENCE [GENOMIC DNA] OF 1-188</scope>
</reference>
<reference key="9">
    <citation type="journal article" date="1979" name="Proc. Natl. Acad. Sci. U.S.A.">
        <title>Nucleotide sequence of the ribosomal protein gene cluster adjacent to the gene for RNA polymerase subunit beta in Escherichia coli.</title>
        <authorList>
            <person name="Post L.E."/>
            <person name="Strycharz G.D."/>
            <person name="Nomura M."/>
            <person name="Lewis H."/>
            <person name="Dennis P.P."/>
        </authorList>
    </citation>
    <scope>NUCLEOTIDE SEQUENCE [GENOMIC DNA] OF 1-33</scope>
</reference>
<reference key="10">
    <citation type="journal article" date="1975" name="FEBS Lett.">
        <title>The subunits of DNA-dependent RNA polymerase from E. coli: I. Amino acid analysis and primary structure of the N-terminal regions.</title>
        <authorList>
            <person name="Fujiki H."/>
            <person name="Zurek G."/>
        </authorList>
    </citation>
    <scope>PROTEIN SEQUENCE OF 1-4</scope>
    <source>
        <strain>K12</strain>
    </source>
</reference>
<reference key="11">
    <citation type="journal article" date="1980" name="Bioorg. Khim.">
        <title>Primary structure of RNA polymerase from E. coli; nucleotide sequence of EcoR1-C fragment of gene rpoB and amino acid sequence of the corresponding fragment of beta-subunit.</title>
        <authorList>
            <person name="Ovchinnikov Y.A."/>
            <person name="Sverdlov E.D."/>
            <person name="Lipkin V.M."/>
            <person name="Monastyrskaya G.S."/>
            <person name="Chertov O.Y."/>
            <person name="Gubanov V.V."/>
            <person name="Guryev S.O."/>
            <person name="Modyanov N.N."/>
            <person name="Grinkevich V.A."/>
            <person name="Makarova I.A."/>
            <person name="Marchenko T.V."/>
            <person name="Polovnikova I.N."/>
        </authorList>
    </citation>
    <scope>NUCLEOTIDE SEQUENCE [GENOMIC DNA] OF 187-1144</scope>
</reference>
<reference key="12">
    <citation type="journal article" date="1980" name="Bioorg. Khim.">
        <title>The nucleotide sequence of strong RNA polymerase binding site within the E.coli rpoB structural gene.</title>
        <authorList>
            <person name="Sverdlov E.D."/>
            <person name="Lipkin V.M."/>
            <person name="Monastyrskaya G.S."/>
            <person name="Gubanov V.V."/>
            <person name="Guryev S.O."/>
            <person name="Chertov O.Y."/>
        </authorList>
    </citation>
    <scope>NUCLEOTIDE SEQUENCE [GENOMIC DNA] OF 187-354</scope>
</reference>
<reference key="13">
    <citation type="submission" date="1996-11" db="EMBL/GenBank/DDBJ databases">
        <title>RNA polymerase beta-subunit.</title>
        <authorList>
            <person name="Mollet C."/>
            <person name="Drancourt M."/>
            <person name="Raoult D."/>
        </authorList>
    </citation>
    <scope>NUCLEOTIDE SEQUENCE [GENOMIC DNA] OF 500-669</scope>
    <source>
        <strain>ATCC 25290</strain>
    </source>
</reference>
<reference key="14">
    <citation type="journal article" date="1980" name="Bioorg. Khim.">
        <title>Structure of a central part of E.coli operon rpoBC. Nucleotide sequence of the gene for beta subunit of RNA polymerase.</title>
        <authorList>
            <person name="Gurevich A.I."/>
            <person name="Igoshin A.V."/>
            <person name="Kolosov M.N."/>
        </authorList>
    </citation>
    <scope>NUCLEOTIDE SEQUENCE [GENOMIC DNA] OF 1143-1342</scope>
</reference>
<reference key="15">
    <citation type="journal article" date="1991" name="Cell">
        <title>Bipartite functional map of the E. coli RNA polymerase alpha subunit: involvement of the C-terminal region in transcription activation by cAMP-CRP.</title>
        <authorList>
            <person name="Igarashi K."/>
            <person name="Ishihama A."/>
        </authorList>
    </citation>
    <scope>FUNCTION IN TRANSCRIPTION</scope>
    <scope>SUBUNIT</scope>
</reference>
<reference key="16">
    <citation type="journal article" date="1991" name="Proc. Natl. Acad. Sci. U.S.A.">
        <title>A beta subunit mutation disrupting the catalytic function of Escherichia coli RNA polymerase.</title>
        <authorList>
            <person name="Lee J."/>
            <person name="Kashlev M."/>
            <person name="Borukhov S."/>
            <person name="Goldfarb A."/>
        </authorList>
    </citation>
    <scope>MUTAGENESIS OF GLU-813</scope>
</reference>
<reference key="17">
    <citation type="journal article" date="1997" name="Electrophoresis">
        <title>Escherichia coli proteome analysis using the gene-protein database.</title>
        <authorList>
            <person name="VanBogelen R.A."/>
            <person name="Abshire K.Z."/>
            <person name="Moldover B."/>
            <person name="Olson E.R."/>
            <person name="Neidhardt F.C."/>
        </authorList>
    </citation>
    <scope>IDENTIFICATION BY 2D-GEL</scope>
</reference>
<reference key="18">
    <citation type="journal article" date="2008" name="Proc. Natl. Acad. Sci. U.S.A.">
        <title>The bacteriophage lambda Q antiterminator protein contacts the beta-flap domain of RNA polymerase.</title>
        <authorList>
            <person name="Deighan P."/>
            <person name="Diez C.M."/>
            <person name="Leibman M."/>
            <person name="Hochschild A."/>
            <person name="Nickels B.E."/>
        </authorList>
    </citation>
    <scope>INTERACTION WITH ESCHERICHIA PHAGE LAMBDA ANTITERMINATION PROTEIN Q (MICROBIAL INFECTION)</scope>
</reference>
<reference key="19">
    <citation type="journal article" date="2020" name="Sci. Rep.">
        <title>NusA directly interacts with antitermination factor Q from phage lambda.</title>
        <authorList>
            <person name="Dudenhoeffer B.R."/>
            <person name="Borggraefe J."/>
            <person name="Schweimer K."/>
            <person name="Knauer S.H."/>
        </authorList>
    </citation>
    <scope>INTERACTION WITH ESCHERICHIA PHAGE LAMBDA ANTITERMINATION PROTEIN Q (MICROBIAL INFECTION)</scope>
</reference>
<reference key="20">
    <citation type="journal article" date="2009" name="Mol. Cell. Proteomics">
        <title>Lysine acetylation is a highly abundant and evolutionarily conserved modification in Escherichia coli.</title>
        <authorList>
            <person name="Zhang J."/>
            <person name="Sprung R."/>
            <person name="Pei J."/>
            <person name="Tan X."/>
            <person name="Kim S."/>
            <person name="Zhu H."/>
            <person name="Liu C.F."/>
            <person name="Grishin N.V."/>
            <person name="Zhao Y."/>
        </authorList>
    </citation>
    <scope>ACETYLATION [LARGE SCALE ANALYSIS] AT LYS-1022 AND LYS-1200</scope>
    <scope>IDENTIFICATION BY MASS SPECTROMETRY</scope>
    <source>
        <strain>K12 / JW1106</strain>
        <strain>K12 / MG1655 / ATCC 47076</strain>
    </source>
</reference>
<reference key="21">
    <citation type="journal article" date="2011" name="Mol. Microbiol.">
        <title>Involvement of protein acetylation in glucose-induced transcription of a stress-responsive promoter.</title>
        <authorList>
            <person name="Lima B.P."/>
            <person name="Antelmann H."/>
            <person name="Gronau K."/>
            <person name="Chi B.K."/>
            <person name="Becher D."/>
            <person name="Brinsmade S.R."/>
            <person name="Wolfe A.J."/>
        </authorList>
    </citation>
    <scope>ACETYLATION</scope>
</reference>
<reference key="22">
    <citation type="journal article" date="2018" name="Int. J. Biol. Macromol.">
        <title>Identification of functional interactome of a key cell division regulatory protein CedA of E.coli.</title>
        <authorList>
            <person name="Sharma P."/>
            <person name="Tomar A.K."/>
            <person name="Kundu B."/>
        </authorList>
    </citation>
    <scope>INTERACTION WITH CEDA</scope>
</reference>
<reference evidence="14" key="23">
    <citation type="journal article" date="2009" name="Proc. Natl. Acad. Sci. U.S.A.">
        <title>Three-dimensional EM structure of an intact activator-dependent transcription initiation complex.</title>
        <authorList>
            <person name="Hudson B.P."/>
            <person name="Quispe J."/>
            <person name="Lara-Gonzalez S."/>
            <person name="Kim Y."/>
            <person name="Berman H.M."/>
            <person name="Arnold E."/>
            <person name="Ebright R.H."/>
            <person name="Lawson C.L."/>
        </authorList>
    </citation>
    <scope>STRUCTURE BY ELECTRON MICROSCOPY (19.80 ANGSTROMS) IN COMPLEX WITH RPOA; RPOC; RPOD; RPOZ; CRP AND DNA</scope>
    <scope>DNA-BINDING</scope>
    <scope>SUBUNIT</scope>
</reference>
<reference evidence="15" key="24">
    <citation type="journal article" date="2011" name="Proc. Natl. Acad. Sci. U.S.A.">
        <title>Crystal structure of the bacteriophage T4 late-transcription coactivator gp33 with the beta-subunit flap domain of Escherichia coli RNA polymerase.</title>
        <authorList>
            <person name="Twist K.A."/>
            <person name="Campbell E.A."/>
            <person name="Deighan P."/>
            <person name="Nechaev S."/>
            <person name="Jain V."/>
            <person name="Geiduschek E.P."/>
            <person name="Hochschild A."/>
            <person name="Darst S.A."/>
        </authorList>
    </citation>
    <scope>X-RAY CRYSTALLOGRAPHY (3.00 ANGSTROMS) OF 831-1057</scope>
    <scope>INTERACTION WITH ENTEROBACTERIA PHAGE T4 RNA POLYMERASE COACTIVATOR (MICROBIAL INFECTION)</scope>
</reference>
<reference evidence="16 17" key="25">
    <citation type="journal article" date="2014" name="Elife">
        <title>Transcription inhibition by the depsipeptide antibiotic salinamide A.</title>
        <authorList>
            <person name="Degen D."/>
            <person name="Feng Y."/>
            <person name="Zhang Y."/>
            <person name="Ebright K.Y."/>
            <person name="Ebright Y.W."/>
            <person name="Gigliotti M."/>
            <person name="Vahedian-Movahed H."/>
            <person name="Mandal S."/>
            <person name="Talaue M."/>
            <person name="Connell N."/>
            <person name="Arnold E."/>
            <person name="Fenical W."/>
            <person name="Ebright R.H."/>
        </authorList>
    </citation>
    <scope>X-RAY CRYSTALLOGRAPHY (3.90 ANGSTROMS) IN COMPLEX WITH RPOA; RPOC; RPOD; RPOZ AND SALINAMIDE A</scope>
    <scope>FUNCTION</scope>
    <scope>SUBUNIT</scope>
    <scope>BIOTECHNOLOGY</scope>
    <scope>ANTIBIOTIC RESISTANCE</scope>
    <scope>MUTAGENESIS OF ILE-561; ILE-569; ALA-665; ASP-675; ASN-677 AND LEU-680</scope>
</reference>
<reference evidence="18 19" key="26">
    <citation type="journal article" date="2020" name="Mol. Cell">
        <title>Structure-Based Mechanisms of a Molecular RNA Polymerase/Chaperone Machine Required for Ribosome Biosynthesis.</title>
        <authorList>
            <person name="Huang Y.H."/>
            <person name="Hilal T."/>
            <person name="Loll B."/>
            <person name="Buerger J."/>
            <person name="Mielke T."/>
            <person name="Boettcher C."/>
            <person name="Said N."/>
            <person name="Wahl M.C."/>
        </authorList>
    </citation>
    <scope>STRUCTURE BY ELECTRON MICROSCOPY (3.80 ANGSTROMS) OF RRNA TRANSCRIPTION-ELONGATION-ANTITERMINATION COMPLEXES WITH AND WITHOUT S4</scope>
    <scope>FUNCTION</scope>
    <scope>SUBUNIT</scope>
</reference>
<name>RPOB_ECOLI</name>
<dbReference type="EC" id="2.7.7.6"/>
<dbReference type="EMBL" id="V00339">
    <property type="protein sequence ID" value="CAA23625.1"/>
    <property type="molecule type" value="Genomic_DNA"/>
</dbReference>
<dbReference type="EMBL" id="V00340">
    <property type="protein sequence ID" value="CAA23627.1"/>
    <property type="molecule type" value="Genomic_DNA"/>
</dbReference>
<dbReference type="EMBL" id="U76222">
    <property type="protein sequence ID" value="AAB18647.1"/>
    <property type="molecule type" value="Genomic_DNA"/>
</dbReference>
<dbReference type="EMBL" id="U00006">
    <property type="protein sequence ID" value="AAC43085.1"/>
    <property type="molecule type" value="Genomic_DNA"/>
</dbReference>
<dbReference type="EMBL" id="U00096">
    <property type="protein sequence ID" value="AAC76961.1"/>
    <property type="molecule type" value="Genomic_DNA"/>
</dbReference>
<dbReference type="EMBL" id="AP009048">
    <property type="protein sequence ID" value="BAE77333.1"/>
    <property type="molecule type" value="Genomic_DNA"/>
</dbReference>
<dbReference type="EMBL" id="V00341">
    <property type="protein sequence ID" value="CAA23629.1"/>
    <property type="molecule type" value="Genomic_DNA"/>
</dbReference>
<dbReference type="EMBL" id="M38292">
    <property type="protein sequence ID" value="AAA24579.1"/>
    <property type="molecule type" value="Genomic_DNA"/>
</dbReference>
<dbReference type="EMBL" id="M38293">
    <property type="protein sequence ID" value="AAA24581.1"/>
    <property type="molecule type" value="Genomic_DNA"/>
</dbReference>
<dbReference type="EMBL" id="M38287">
    <property type="protein sequence ID" value="AAA24585.1"/>
    <property type="molecule type" value="Genomic_DNA"/>
</dbReference>
<dbReference type="EMBL" id="M38304">
    <property type="protein sequence ID" value="AAA24580.1"/>
    <property type="molecule type" value="Genomic_DNA"/>
</dbReference>
<dbReference type="EMBL" id="U77436">
    <property type="protein sequence ID" value="AAD09605.1"/>
    <property type="molecule type" value="Genomic_DNA"/>
</dbReference>
<dbReference type="EMBL" id="M38303">
    <property type="protein sequence ID" value="AAA24583.1"/>
    <property type="molecule type" value="Genomic_DNA"/>
</dbReference>
<dbReference type="PIR" id="F65205">
    <property type="entry name" value="RNECB"/>
</dbReference>
<dbReference type="RefSeq" id="NP_418414.1">
    <property type="nucleotide sequence ID" value="NC_000913.3"/>
</dbReference>
<dbReference type="RefSeq" id="WP_000263098.1">
    <property type="nucleotide sequence ID" value="NZ_STEB01000045.1"/>
</dbReference>
<dbReference type="PDB" id="3IYD">
    <property type="method" value="EM"/>
    <property type="chains" value="C=1-1342"/>
</dbReference>
<dbReference type="PDB" id="3LTI">
    <property type="method" value="X-ray"/>
    <property type="resolution" value="1.60 A"/>
    <property type="chains" value="A=152-443"/>
</dbReference>
<dbReference type="PDB" id="3LU0">
    <property type="method" value="EM"/>
    <property type="chains" value="C=1-1342"/>
</dbReference>
<dbReference type="PDB" id="3T72">
    <property type="method" value="X-ray"/>
    <property type="resolution" value="4.33 A"/>
    <property type="chains" value="o/q=896-910"/>
</dbReference>
<dbReference type="PDB" id="3TBI">
    <property type="method" value="X-ray"/>
    <property type="resolution" value="3.00 A"/>
    <property type="chains" value="B=831-1057"/>
</dbReference>
<dbReference type="PDB" id="4JK1">
    <property type="method" value="X-ray"/>
    <property type="resolution" value="3.90 A"/>
    <property type="chains" value="C/H=1-1342"/>
</dbReference>
<dbReference type="PDB" id="4JK2">
    <property type="method" value="X-ray"/>
    <property type="resolution" value="4.20 A"/>
    <property type="chains" value="C/H=1-1342"/>
</dbReference>
<dbReference type="PDB" id="4KMU">
    <property type="method" value="X-ray"/>
    <property type="resolution" value="3.85 A"/>
    <property type="chains" value="C/H=1-1342"/>
</dbReference>
<dbReference type="PDB" id="4KN4">
    <property type="method" value="X-ray"/>
    <property type="resolution" value="3.96 A"/>
    <property type="chains" value="C/H=1-1342"/>
</dbReference>
<dbReference type="PDB" id="4KN7">
    <property type="method" value="X-ray"/>
    <property type="resolution" value="3.69 A"/>
    <property type="chains" value="C/H=1-1342"/>
</dbReference>
<dbReference type="PDB" id="4MEX">
    <property type="method" value="X-ray"/>
    <property type="resolution" value="3.90 A"/>
    <property type="chains" value="C/I=1-1342"/>
</dbReference>
<dbReference type="PDB" id="4MEY">
    <property type="method" value="X-ray"/>
    <property type="resolution" value="3.95 A"/>
    <property type="chains" value="C/I=1-1342"/>
</dbReference>
<dbReference type="PDB" id="4S20">
    <property type="method" value="X-ray"/>
    <property type="resolution" value="4.70 A"/>
    <property type="chains" value="C/H=1-1342"/>
</dbReference>
<dbReference type="PDB" id="4XSX">
    <property type="method" value="X-ray"/>
    <property type="resolution" value="3.71 A"/>
    <property type="chains" value="C/I=1-1342"/>
</dbReference>
<dbReference type="PDB" id="4XSY">
    <property type="method" value="X-ray"/>
    <property type="resolution" value="4.01 A"/>
    <property type="chains" value="C/I=1-1342"/>
</dbReference>
<dbReference type="PDB" id="4XSZ">
    <property type="method" value="X-ray"/>
    <property type="resolution" value="3.68 A"/>
    <property type="chains" value="C/I=1-1342"/>
</dbReference>
<dbReference type="PDB" id="4YG2">
    <property type="method" value="X-ray"/>
    <property type="resolution" value="3.70 A"/>
    <property type="chains" value="C/I=1-1342"/>
</dbReference>
<dbReference type="PDB" id="4YLN">
    <property type="method" value="X-ray"/>
    <property type="resolution" value="5.50 A"/>
    <property type="chains" value="C/I/O=1-1342"/>
</dbReference>
<dbReference type="PDB" id="4YLO">
    <property type="method" value="X-ray"/>
    <property type="resolution" value="6.00 A"/>
    <property type="chains" value="C/I/O=1-1342"/>
</dbReference>
<dbReference type="PDB" id="4YLP">
    <property type="method" value="X-ray"/>
    <property type="resolution" value="5.50 A"/>
    <property type="chains" value="C/I/O=1-1342"/>
</dbReference>
<dbReference type="PDB" id="4ZH2">
    <property type="method" value="X-ray"/>
    <property type="resolution" value="4.20 A"/>
    <property type="chains" value="C/I=1-1342"/>
</dbReference>
<dbReference type="PDB" id="4ZH3">
    <property type="method" value="X-ray"/>
    <property type="resolution" value="4.08 A"/>
    <property type="chains" value="C/I=1-1342"/>
</dbReference>
<dbReference type="PDB" id="4ZH4">
    <property type="method" value="X-ray"/>
    <property type="resolution" value="3.99 A"/>
    <property type="chains" value="C/I=1-1342"/>
</dbReference>
<dbReference type="PDB" id="5EZK">
    <property type="method" value="X-ray"/>
    <property type="resolution" value="8.50 A"/>
    <property type="chains" value="C=1-1342"/>
</dbReference>
<dbReference type="PDB" id="5IPL">
    <property type="method" value="X-ray"/>
    <property type="resolution" value="3.60 A"/>
    <property type="chains" value="C=1-1342"/>
</dbReference>
<dbReference type="PDB" id="5IPM">
    <property type="method" value="X-ray"/>
    <property type="resolution" value="4.20 A"/>
    <property type="chains" value="C=1-1342"/>
</dbReference>
<dbReference type="PDB" id="5IPN">
    <property type="method" value="X-ray"/>
    <property type="resolution" value="4.61 A"/>
    <property type="chains" value="C=1-1342"/>
</dbReference>
<dbReference type="PDB" id="5MS0">
    <property type="method" value="EM"/>
    <property type="resolution" value="9.80 A"/>
    <property type="chains" value="C=1-1342"/>
</dbReference>
<dbReference type="PDB" id="5MY1">
    <property type="method" value="EM"/>
    <property type="resolution" value="7.60 A"/>
    <property type="chains" value="X=1-1342"/>
</dbReference>
<dbReference type="PDB" id="5NSR">
    <property type="method" value="EM"/>
    <property type="resolution" value="3.80 A"/>
    <property type="chains" value="C=1-1342"/>
</dbReference>
<dbReference type="PDB" id="5NSS">
    <property type="method" value="EM"/>
    <property type="resolution" value="5.80 A"/>
    <property type="chains" value="C=1-1342"/>
</dbReference>
<dbReference type="PDB" id="5NWT">
    <property type="method" value="X-ray"/>
    <property type="resolution" value="3.76 A"/>
    <property type="chains" value="C=1-1342"/>
</dbReference>
<dbReference type="PDB" id="5TBZ">
    <property type="method" value="X-ray"/>
    <property type="resolution" value="7.00 A"/>
    <property type="chains" value="C/H=1-1342"/>
</dbReference>
<dbReference type="PDB" id="5UAC">
    <property type="method" value="X-ray"/>
    <property type="resolution" value="3.80 A"/>
    <property type="chains" value="C/I=1-1342"/>
</dbReference>
<dbReference type="PDB" id="5UAG">
    <property type="method" value="X-ray"/>
    <property type="resolution" value="3.40 A"/>
    <property type="chains" value="C/I=1-1342"/>
</dbReference>
<dbReference type="PDB" id="5UAH">
    <property type="method" value="X-ray"/>
    <property type="resolution" value="4.10 A"/>
    <property type="chains" value="C/I=1-1342"/>
</dbReference>
<dbReference type="PDB" id="5UAJ">
    <property type="method" value="X-ray"/>
    <property type="resolution" value="3.92 A"/>
    <property type="chains" value="C/I=1-1342"/>
</dbReference>
<dbReference type="PDB" id="5UAL">
    <property type="method" value="X-ray"/>
    <property type="resolution" value="3.89 A"/>
    <property type="chains" value="C/I=1-1342"/>
</dbReference>
<dbReference type="PDB" id="5UAQ">
    <property type="method" value="X-ray"/>
    <property type="resolution" value="3.60 A"/>
    <property type="chains" value="C/I=1-1342"/>
</dbReference>
<dbReference type="PDB" id="5UI8">
    <property type="method" value="X-ray"/>
    <property type="resolution" value="3.76 A"/>
    <property type="chains" value="I=1-1342"/>
</dbReference>
<dbReference type="PDB" id="5VSW">
    <property type="method" value="X-ray"/>
    <property type="resolution" value="4.29 A"/>
    <property type="chains" value="C/I=1-1342"/>
</dbReference>
<dbReference type="PDB" id="5VT0">
    <property type="method" value="EM"/>
    <property type="resolution" value="3.78 A"/>
    <property type="chains" value="I=1-1342"/>
</dbReference>
<dbReference type="PDB" id="5W1S">
    <property type="method" value="X-ray"/>
    <property type="resolution" value="3.81 A"/>
    <property type="chains" value="C/I=1-1342"/>
</dbReference>
<dbReference type="PDB" id="5W1T">
    <property type="method" value="X-ray"/>
    <property type="resolution" value="4.50 A"/>
    <property type="chains" value="C/I=1-1342"/>
</dbReference>
<dbReference type="PDB" id="6ALF">
    <property type="method" value="EM"/>
    <property type="resolution" value="4.10 A"/>
    <property type="chains" value="I=1-1342"/>
</dbReference>
<dbReference type="PDB" id="6ALG">
    <property type="method" value="EM"/>
    <property type="resolution" value="3.70 A"/>
    <property type="chains" value="I=1-1342"/>
</dbReference>
<dbReference type="PDB" id="6ALH">
    <property type="method" value="EM"/>
    <property type="resolution" value="4.40 A"/>
    <property type="chains" value="I=1-1342"/>
</dbReference>
<dbReference type="PDB" id="6ASX">
    <property type="method" value="EM"/>
    <property type="resolution" value="3.80 A"/>
    <property type="chains" value="I=1-1342"/>
</dbReference>
<dbReference type="PDB" id="6AWB">
    <property type="method" value="EM"/>
    <property type="resolution" value="6.70 A"/>
    <property type="chains" value="03=2-1341"/>
</dbReference>
<dbReference type="PDB" id="6AWC">
    <property type="method" value="EM"/>
    <property type="resolution" value="7.90 A"/>
    <property type="chains" value="03=2-1341"/>
</dbReference>
<dbReference type="PDB" id="6AWD">
    <property type="method" value="EM"/>
    <property type="resolution" value="8.10 A"/>
    <property type="chains" value="03=2-1341"/>
</dbReference>
<dbReference type="PDB" id="6B6H">
    <property type="method" value="EM"/>
    <property type="resolution" value="3.90 A"/>
    <property type="chains" value="C=1-1342"/>
</dbReference>
<dbReference type="PDB" id="6BJS">
    <property type="method" value="EM"/>
    <property type="resolution" value="5.50 A"/>
    <property type="chains" value="I=1-1342"/>
</dbReference>
<dbReference type="PDB" id="6BYU">
    <property type="method" value="X-ray"/>
    <property type="resolution" value="3.60 A"/>
    <property type="chains" value="C/I=1-1342"/>
</dbReference>
<dbReference type="PDB" id="6C6S">
    <property type="method" value="EM"/>
    <property type="resolution" value="3.70 A"/>
    <property type="chains" value="I=1-1342"/>
</dbReference>
<dbReference type="PDB" id="6C6T">
    <property type="method" value="EM"/>
    <property type="resolution" value="3.50 A"/>
    <property type="chains" value="I=1-1342"/>
</dbReference>
<dbReference type="PDB" id="6C6U">
    <property type="method" value="EM"/>
    <property type="resolution" value="3.70 A"/>
    <property type="chains" value="I=1-1342"/>
</dbReference>
<dbReference type="PDB" id="6C9Y">
    <property type="method" value="EM"/>
    <property type="resolution" value="4.25 A"/>
    <property type="chains" value="C=1-1342"/>
</dbReference>
<dbReference type="PDB" id="6CA0">
    <property type="method" value="EM"/>
    <property type="resolution" value="5.75 A"/>
    <property type="chains" value="C=1-1342"/>
</dbReference>
<dbReference type="PDB" id="6CUX">
    <property type="method" value="X-ray"/>
    <property type="resolution" value="4.10 A"/>
    <property type="chains" value="C/I=1-1342"/>
</dbReference>
<dbReference type="PDB" id="6FLP">
    <property type="method" value="EM"/>
    <property type="resolution" value="4.10 A"/>
    <property type="chains" value="C=1-1342"/>
</dbReference>
<dbReference type="PDB" id="6FLQ">
    <property type="method" value="EM"/>
    <property type="resolution" value="4.10 A"/>
    <property type="chains" value="C=1-1342"/>
</dbReference>
<dbReference type="PDB" id="6GFW">
    <property type="method" value="EM"/>
    <property type="resolution" value="3.70 A"/>
    <property type="chains" value="C=1-1342"/>
</dbReference>
<dbReference type="PDB" id="6GH5">
    <property type="method" value="EM"/>
    <property type="resolution" value="3.40 A"/>
    <property type="chains" value="C=1-1342"/>
</dbReference>
<dbReference type="PDB" id="6GH6">
    <property type="method" value="EM"/>
    <property type="resolution" value="4.10 A"/>
    <property type="chains" value="C=1-1342"/>
</dbReference>
<dbReference type="PDB" id="6GOV">
    <property type="method" value="EM"/>
    <property type="resolution" value="3.70 A"/>
    <property type="chains" value="X=1-1342"/>
</dbReference>
<dbReference type="PDB" id="6JBQ">
    <property type="method" value="EM"/>
    <property type="resolution" value="4.02 A"/>
    <property type="chains" value="C=1-1342"/>
</dbReference>
<dbReference type="PDB" id="6JNX">
    <property type="method" value="EM"/>
    <property type="resolution" value="4.08 A"/>
    <property type="chains" value="C=1-1342"/>
</dbReference>
<dbReference type="PDB" id="6K4Y">
    <property type="method" value="EM"/>
    <property type="resolution" value="3.79 A"/>
    <property type="chains" value="C=1-1342"/>
</dbReference>
<dbReference type="PDB" id="6KJ6">
    <property type="method" value="EM"/>
    <property type="resolution" value="3.80 A"/>
    <property type="chains" value="C=1-1342"/>
</dbReference>
<dbReference type="PDB" id="6LDI">
    <property type="method" value="EM"/>
    <property type="resolution" value="3.69 A"/>
    <property type="chains" value="C=1-1342"/>
</dbReference>
<dbReference type="PDB" id="6N4C">
    <property type="method" value="EM"/>
    <property type="resolution" value="17.00 A"/>
    <property type="chains" value="C=2-1342"/>
</dbReference>
<dbReference type="PDB" id="6N57">
    <property type="method" value="EM"/>
    <property type="resolution" value="3.70 A"/>
    <property type="chains" value="I=1-1342"/>
</dbReference>
<dbReference type="PDB" id="6N58">
    <property type="method" value="EM"/>
    <property type="resolution" value="3.78 A"/>
    <property type="chains" value="I=1-1342"/>
</dbReference>
<dbReference type="PDB" id="6N60">
    <property type="method" value="X-ray"/>
    <property type="resolution" value="3.68 A"/>
    <property type="chains" value="C=1-1342"/>
</dbReference>
<dbReference type="PDB" id="6N61">
    <property type="method" value="X-ray"/>
    <property type="resolution" value="3.25 A"/>
    <property type="chains" value="C=1-1342"/>
</dbReference>
<dbReference type="PDB" id="6N62">
    <property type="method" value="X-ray"/>
    <property type="resolution" value="3.80 A"/>
    <property type="chains" value="C=1-1342"/>
</dbReference>
<dbReference type="PDB" id="6OMF">
    <property type="method" value="EM"/>
    <property type="resolution" value="3.26 A"/>
    <property type="chains" value="C=1-1342"/>
</dbReference>
<dbReference type="PDB" id="6OUL">
    <property type="method" value="EM"/>
    <property type="resolution" value="3.40 A"/>
    <property type="chains" value="I=1-1342"/>
</dbReference>
<dbReference type="PDB" id="6P18">
    <property type="method" value="EM"/>
    <property type="resolution" value="3.50 A"/>
    <property type="chains" value="C=1-1342"/>
</dbReference>
<dbReference type="PDB" id="6P19">
    <property type="method" value="EM"/>
    <property type="resolution" value="3.80 A"/>
    <property type="chains" value="C=1-1342"/>
</dbReference>
<dbReference type="PDB" id="6P1K">
    <property type="method" value="EM"/>
    <property type="resolution" value="4.05 A"/>
    <property type="chains" value="I=1-1342"/>
</dbReference>
<dbReference type="PDB" id="6PB4">
    <property type="method" value="EM"/>
    <property type="resolution" value="4.35 A"/>
    <property type="chains" value="C=1-1342"/>
</dbReference>
<dbReference type="PDB" id="6PB5">
    <property type="method" value="EM"/>
    <property type="resolution" value="4.52 A"/>
    <property type="chains" value="C=1-1342"/>
</dbReference>
<dbReference type="PDB" id="6PB6">
    <property type="method" value="EM"/>
    <property type="resolution" value="4.29 A"/>
    <property type="chains" value="C=1-1342"/>
</dbReference>
<dbReference type="PDB" id="6PMI">
    <property type="method" value="EM"/>
    <property type="resolution" value="3.86 A"/>
    <property type="chains" value="C=1-1342"/>
</dbReference>
<dbReference type="PDB" id="6PMJ">
    <property type="method" value="EM"/>
    <property type="resolution" value="3.91 A"/>
    <property type="chains" value="C=1-1342"/>
</dbReference>
<dbReference type="PDB" id="6PSQ">
    <property type="method" value="EM"/>
    <property type="resolution" value="3.40 A"/>
    <property type="chains" value="I=1-1342"/>
</dbReference>
<dbReference type="PDB" id="6PSR">
    <property type="method" value="EM"/>
    <property type="resolution" value="3.40 A"/>
    <property type="chains" value="I=1-1342"/>
</dbReference>
<dbReference type="PDB" id="6PSS">
    <property type="method" value="EM"/>
    <property type="resolution" value="3.50 A"/>
    <property type="chains" value="I=1-1342"/>
</dbReference>
<dbReference type="PDB" id="6PST">
    <property type="method" value="EM"/>
    <property type="resolution" value="3.00 A"/>
    <property type="chains" value="I=1-1342"/>
</dbReference>
<dbReference type="PDB" id="6PSU">
    <property type="method" value="EM"/>
    <property type="resolution" value="3.90 A"/>
    <property type="chains" value="I=1-1342"/>
</dbReference>
<dbReference type="PDB" id="6PSV">
    <property type="method" value="EM"/>
    <property type="resolution" value="3.50 A"/>
    <property type="chains" value="I=1-1342"/>
</dbReference>
<dbReference type="PDB" id="6PSW">
    <property type="method" value="EM"/>
    <property type="resolution" value="3.70 A"/>
    <property type="chains" value="I=1-1342"/>
</dbReference>
<dbReference type="PDB" id="6R9B">
    <property type="method" value="EM"/>
    <property type="resolution" value="3.80 A"/>
    <property type="chains" value="C=1-1342"/>
</dbReference>
<dbReference type="PDB" id="6R9G">
    <property type="method" value="EM"/>
    <property type="resolution" value="3.70 A"/>
    <property type="chains" value="C=1-1342"/>
</dbReference>
<dbReference type="PDB" id="6RH3">
    <property type="method" value="EM"/>
    <property type="resolution" value="3.60 A"/>
    <property type="chains" value="C=1-1342"/>
</dbReference>
<dbReference type="PDB" id="6RI7">
    <property type="method" value="EM"/>
    <property type="resolution" value="3.90 A"/>
    <property type="chains" value="C=1-1342"/>
</dbReference>
<dbReference type="PDB" id="6RI9">
    <property type="method" value="EM"/>
    <property type="resolution" value="3.70 A"/>
    <property type="chains" value="C=1-1342"/>
</dbReference>
<dbReference type="PDB" id="6RIN">
    <property type="method" value="EM"/>
    <property type="resolution" value="3.70 A"/>
    <property type="chains" value="C=1-1342"/>
</dbReference>
<dbReference type="PDB" id="6RIP">
    <property type="method" value="EM"/>
    <property type="resolution" value="3.40 A"/>
    <property type="chains" value="C=1-1342"/>
</dbReference>
<dbReference type="PDB" id="6TQN">
    <property type="method" value="EM"/>
    <property type="resolution" value="3.80 A"/>
    <property type="chains" value="X=1-1342"/>
</dbReference>
<dbReference type="PDB" id="6TQO">
    <property type="method" value="EM"/>
    <property type="resolution" value="4.00 A"/>
    <property type="chains" value="X=1-1342"/>
</dbReference>
<dbReference type="PDB" id="6UTV">
    <property type="method" value="X-ray"/>
    <property type="resolution" value="3.45 A"/>
    <property type="chains" value="CCC=1-1342"/>
</dbReference>
<dbReference type="PDB" id="6UTW">
    <property type="method" value="X-ray"/>
    <property type="resolution" value="3.85 A"/>
    <property type="chains" value="CCC=1-1342"/>
</dbReference>
<dbReference type="PDB" id="6UTX">
    <property type="method" value="X-ray"/>
    <property type="resolution" value="4.05 A"/>
    <property type="chains" value="CCC=1-1342"/>
</dbReference>
<dbReference type="PDB" id="6UTY">
    <property type="method" value="X-ray"/>
    <property type="resolution" value="4.15 A"/>
    <property type="chains" value="CCC=1-1342"/>
</dbReference>
<dbReference type="PDB" id="6UTZ">
    <property type="method" value="X-ray"/>
    <property type="resolution" value="3.80 A"/>
    <property type="chains" value="CCC=1-1342"/>
</dbReference>
<dbReference type="PDB" id="6UU0">
    <property type="method" value="X-ray"/>
    <property type="resolution" value="3.90 A"/>
    <property type="chains" value="CCC=1-1342"/>
</dbReference>
<dbReference type="PDB" id="6UU1">
    <property type="method" value="X-ray"/>
    <property type="resolution" value="4.10 A"/>
    <property type="chains" value="CCC=1-1342"/>
</dbReference>
<dbReference type="PDB" id="6UU2">
    <property type="method" value="X-ray"/>
    <property type="resolution" value="4.40 A"/>
    <property type="chains" value="CCC=1-1342"/>
</dbReference>
<dbReference type="PDB" id="6UU3">
    <property type="method" value="X-ray"/>
    <property type="resolution" value="4.00 A"/>
    <property type="chains" value="CCC=1-1342"/>
</dbReference>
<dbReference type="PDB" id="6UU4">
    <property type="method" value="X-ray"/>
    <property type="resolution" value="4.30 A"/>
    <property type="chains" value="CCC=1-1342"/>
</dbReference>
<dbReference type="PDB" id="6UU5">
    <property type="method" value="X-ray"/>
    <property type="resolution" value="5.40 A"/>
    <property type="chains" value="CCC=1-1342"/>
</dbReference>
<dbReference type="PDB" id="6UU6">
    <property type="method" value="X-ray"/>
    <property type="resolution" value="4.20 A"/>
    <property type="chains" value="CCC=1-1342"/>
</dbReference>
<dbReference type="PDB" id="6UU7">
    <property type="method" value="X-ray"/>
    <property type="resolution" value="4.40 A"/>
    <property type="chains" value="CCC=1-1342"/>
</dbReference>
<dbReference type="PDB" id="6UU8">
    <property type="method" value="X-ray"/>
    <property type="resolution" value="4.40 A"/>
    <property type="chains" value="CCC=1-1342"/>
</dbReference>
<dbReference type="PDB" id="6UU9">
    <property type="method" value="X-ray"/>
    <property type="resolution" value="5.40 A"/>
    <property type="chains" value="CCC=1-1342"/>
</dbReference>
<dbReference type="PDB" id="6UUA">
    <property type="method" value="X-ray"/>
    <property type="resolution" value="4.00 A"/>
    <property type="chains" value="CCC=1-1342"/>
</dbReference>
<dbReference type="PDB" id="6UUB">
    <property type="method" value="X-ray"/>
    <property type="resolution" value="3.96 A"/>
    <property type="chains" value="CCC=1-1342"/>
</dbReference>
<dbReference type="PDB" id="6UUC">
    <property type="method" value="X-ray"/>
    <property type="resolution" value="4.10 A"/>
    <property type="chains" value="CCC=1-1342"/>
</dbReference>
<dbReference type="PDB" id="6VJS">
    <property type="method" value="X-ray"/>
    <property type="resolution" value="4.02 A"/>
    <property type="chains" value="C/H=1-1342"/>
</dbReference>
<dbReference type="PDB" id="6VU3">
    <property type="method" value="EM"/>
    <property type="resolution" value="3.70 A"/>
    <property type="chains" value="AA=1-1342"/>
</dbReference>
<dbReference type="PDB" id="6VYQ">
    <property type="method" value="EM"/>
    <property type="resolution" value="3.70 A"/>
    <property type="chains" value="AA=2-1342"/>
</dbReference>
<dbReference type="PDB" id="6VYR">
    <property type="method" value="EM"/>
    <property type="resolution" value="3.80 A"/>
    <property type="chains" value="AA=1-1342"/>
</dbReference>
<dbReference type="PDB" id="6VYS">
    <property type="method" value="EM"/>
    <property type="resolution" value="3.70 A"/>
    <property type="chains" value="AA=1-1342"/>
</dbReference>
<dbReference type="PDB" id="6VYT">
    <property type="method" value="EM"/>
    <property type="resolution" value="14.00 A"/>
    <property type="chains" value="AA=1-1342"/>
</dbReference>
<dbReference type="PDB" id="6VYU">
    <property type="method" value="EM"/>
    <property type="resolution" value="7.00 A"/>
    <property type="chains" value="AA=1-1342"/>
</dbReference>
<dbReference type="PDB" id="6VYW">
    <property type="method" value="EM"/>
    <property type="resolution" value="7.00 A"/>
    <property type="chains" value="AA=1-1342"/>
</dbReference>
<dbReference type="PDB" id="6VYX">
    <property type="method" value="EM"/>
    <property type="resolution" value="9.90 A"/>
    <property type="chains" value="AA=1-1342"/>
</dbReference>
<dbReference type="PDB" id="6VYY">
    <property type="method" value="EM"/>
    <property type="resolution" value="9.90 A"/>
    <property type="chains" value="AA=1-1342"/>
</dbReference>
<dbReference type="PDB" id="6VYZ">
    <property type="method" value="EM"/>
    <property type="resolution" value="9.90 A"/>
    <property type="chains" value="AA=1-1342"/>
</dbReference>
<dbReference type="PDB" id="6VZ2">
    <property type="method" value="EM"/>
    <property type="resolution" value="10.00 A"/>
    <property type="chains" value="AA=1-1342"/>
</dbReference>
<dbReference type="PDB" id="6VZ3">
    <property type="method" value="EM"/>
    <property type="resolution" value="8.90 A"/>
    <property type="chains" value="AA=1-1342"/>
</dbReference>
<dbReference type="PDB" id="6VZ5">
    <property type="method" value="EM"/>
    <property type="resolution" value="8.90 A"/>
    <property type="chains" value="AA=1-1342"/>
</dbReference>
<dbReference type="PDB" id="6VZ7">
    <property type="method" value="EM"/>
    <property type="resolution" value="7.00 A"/>
    <property type="chains" value="AA=2-1342"/>
</dbReference>
<dbReference type="PDB" id="6VZJ">
    <property type="method" value="EM"/>
    <property type="resolution" value="4.10 A"/>
    <property type="chains" value="AA=1-1342"/>
</dbReference>
<dbReference type="PDB" id="6WMU">
    <property type="method" value="EM"/>
    <property type="resolution" value="3.18 A"/>
    <property type="chains" value="C=1-1342"/>
</dbReference>
<dbReference type="PDB" id="6X26">
    <property type="method" value="EM"/>
    <property type="resolution" value="4.10 A"/>
    <property type="chains" value="I=1-1342"/>
</dbReference>
<dbReference type="PDB" id="6X2F">
    <property type="method" value="EM"/>
    <property type="resolution" value="4.00 A"/>
    <property type="chains" value="I=1-1342"/>
</dbReference>
<dbReference type="PDB" id="6X2N">
    <property type="method" value="EM"/>
    <property type="resolution" value="3.90 A"/>
    <property type="chains" value="I=1-1342"/>
</dbReference>
<dbReference type="PDB" id="6X43">
    <property type="method" value="EM"/>
    <property type="resolution" value="3.60 A"/>
    <property type="chains" value="I=1-1342"/>
</dbReference>
<dbReference type="PDB" id="6X4W">
    <property type="method" value="EM"/>
    <property type="resolution" value="3.80 A"/>
    <property type="chains" value="I=1-1342"/>
</dbReference>
<dbReference type="PDB" id="6X4Y">
    <property type="method" value="EM"/>
    <property type="resolution" value="3.60 A"/>
    <property type="chains" value="I=1-1342"/>
</dbReference>
<dbReference type="PDB" id="6X50">
    <property type="method" value="EM"/>
    <property type="resolution" value="3.30 A"/>
    <property type="chains" value="I=1-1342"/>
</dbReference>
<dbReference type="PDB" id="6X6T">
    <property type="method" value="EM"/>
    <property type="resolution" value="3.20 A"/>
    <property type="chains" value="AA=1-1342"/>
</dbReference>
<dbReference type="PDB" id="6X7F">
    <property type="method" value="EM"/>
    <property type="resolution" value="3.50 A"/>
    <property type="chains" value="AA=1-1342"/>
</dbReference>
<dbReference type="PDB" id="6X7K">
    <property type="method" value="EM"/>
    <property type="resolution" value="3.10 A"/>
    <property type="chains" value="AA=1-1342"/>
</dbReference>
<dbReference type="PDB" id="6X9Q">
    <property type="method" value="EM"/>
    <property type="resolution" value="4.80 A"/>
    <property type="chains" value="AA=1-1342"/>
</dbReference>
<dbReference type="PDB" id="6XAS">
    <property type="method" value="EM"/>
    <property type="resolution" value="3.80 A"/>
    <property type="chains" value="I=1-1342"/>
</dbReference>
<dbReference type="PDB" id="6XAV">
    <property type="method" value="EM"/>
    <property type="resolution" value="7.70 A"/>
    <property type="chains" value="I=1-1342"/>
</dbReference>
<dbReference type="PDB" id="6XDQ">
    <property type="method" value="EM"/>
    <property type="resolution" value="3.70 A"/>
    <property type="chains" value="AA=1-1342"/>
</dbReference>
<dbReference type="PDB" id="6XDR">
    <property type="method" value="EM"/>
    <property type="resolution" value="4.70 A"/>
    <property type="chains" value="AA=1-1342"/>
</dbReference>
<dbReference type="PDB" id="6XGF">
    <property type="method" value="EM"/>
    <property type="resolution" value="5.00 A"/>
    <property type="chains" value="AA=1-1342"/>
</dbReference>
<dbReference type="PDB" id="6XH7">
    <property type="method" value="EM"/>
    <property type="resolution" value="3.90 A"/>
    <property type="chains" value="C=1-1342"/>
</dbReference>
<dbReference type="PDB" id="6XH8">
    <property type="method" value="EM"/>
    <property type="resolution" value="4.10 A"/>
    <property type="chains" value="C=1-1342"/>
</dbReference>
<dbReference type="PDB" id="6XII">
    <property type="method" value="EM"/>
    <property type="resolution" value="7.00 A"/>
    <property type="chains" value="AA=1-1342"/>
</dbReference>
<dbReference type="PDB" id="6XIJ">
    <property type="method" value="EM"/>
    <property type="resolution" value="8.00 A"/>
    <property type="chains" value="AA=1-1342"/>
</dbReference>
<dbReference type="PDB" id="6XL5">
    <property type="method" value="EM"/>
    <property type="resolution" value="2.50 A"/>
    <property type="chains" value="C=1-1342"/>
</dbReference>
<dbReference type="PDB" id="6XL9">
    <property type="method" value="EM"/>
    <property type="resolution" value="2.50 A"/>
    <property type="chains" value="C=1-1342"/>
</dbReference>
<dbReference type="PDB" id="6XLJ">
    <property type="method" value="EM"/>
    <property type="resolution" value="2.70 A"/>
    <property type="chains" value="C=1-1342"/>
</dbReference>
<dbReference type="PDB" id="6XLL">
    <property type="method" value="EM"/>
    <property type="resolution" value="2.70 A"/>
    <property type="chains" value="C=1-1342"/>
</dbReference>
<dbReference type="PDB" id="6XLM">
    <property type="method" value="EM"/>
    <property type="resolution" value="3.20 A"/>
    <property type="chains" value="C=1-1342"/>
</dbReference>
<dbReference type="PDB" id="6XLN">
    <property type="method" value="EM"/>
    <property type="resolution" value="2.80 A"/>
    <property type="chains" value="C=1-1342"/>
</dbReference>
<dbReference type="PDB" id="6Z9P">
    <property type="method" value="EM"/>
    <property type="resolution" value="3.90 A"/>
    <property type="chains" value="X=1-1342"/>
</dbReference>
<dbReference type="PDB" id="6Z9Q">
    <property type="method" value="EM"/>
    <property type="resolution" value="5.70 A"/>
    <property type="chains" value="X=1-1342"/>
</dbReference>
<dbReference type="PDB" id="6Z9R">
    <property type="method" value="EM"/>
    <property type="resolution" value="4.10 A"/>
    <property type="chains" value="X=1-1342"/>
</dbReference>
<dbReference type="PDB" id="6Z9S">
    <property type="method" value="EM"/>
    <property type="resolution" value="4.40 A"/>
    <property type="chains" value="X=1-1342"/>
</dbReference>
<dbReference type="PDB" id="6Z9T">
    <property type="method" value="EM"/>
    <property type="resolution" value="4.10 A"/>
    <property type="chains" value="X=1-1342"/>
</dbReference>
<dbReference type="PDB" id="6ZTJ">
    <property type="method" value="EM"/>
    <property type="resolution" value="3.40 A"/>
    <property type="chains" value="CC=1-1342"/>
</dbReference>
<dbReference type="PDB" id="6ZTL">
    <property type="method" value="EM"/>
    <property type="resolution" value="3.50 A"/>
    <property type="chains" value="CC=1-1342"/>
</dbReference>
<dbReference type="PDB" id="6ZTM">
    <property type="method" value="EM"/>
    <property type="resolution" value="3.30 A"/>
    <property type="chains" value="CC=1-1342"/>
</dbReference>
<dbReference type="PDB" id="6ZTN">
    <property type="method" value="EM"/>
    <property type="resolution" value="3.90 A"/>
    <property type="chains" value="CC=1-1342"/>
</dbReference>
<dbReference type="PDB" id="6ZTO">
    <property type="method" value="EM"/>
    <property type="resolution" value="3.00 A"/>
    <property type="chains" value="CC=1-1342"/>
</dbReference>
<dbReference type="PDB" id="6ZTP">
    <property type="method" value="EM"/>
    <property type="resolution" value="3.00 A"/>
    <property type="chains" value="CC=1-1342"/>
</dbReference>
<dbReference type="PDB" id="6ZU1">
    <property type="method" value="EM"/>
    <property type="resolution" value="3.00 A"/>
    <property type="chains" value="CC=1-1342"/>
</dbReference>
<dbReference type="PDB" id="7ADB">
    <property type="method" value="EM"/>
    <property type="resolution" value="4.40 A"/>
    <property type="chains" value="X=1-1342"/>
</dbReference>
<dbReference type="PDB" id="7ADC">
    <property type="method" value="EM"/>
    <property type="resolution" value="4.00 A"/>
    <property type="chains" value="X=1-1342"/>
</dbReference>
<dbReference type="PDB" id="7ADD">
    <property type="method" value="EM"/>
    <property type="resolution" value="4.30 A"/>
    <property type="chains" value="X=1-1342"/>
</dbReference>
<dbReference type="PDB" id="7ADE">
    <property type="method" value="EM"/>
    <property type="resolution" value="4.20 A"/>
    <property type="chains" value="X=1-1342"/>
</dbReference>
<dbReference type="PDB" id="7BEF">
    <property type="method" value="EM"/>
    <property type="resolution" value="4.50 A"/>
    <property type="chains" value="C=1-1342"/>
</dbReference>
<dbReference type="PDB" id="7BEG">
    <property type="method" value="EM"/>
    <property type="resolution" value="4.20 A"/>
    <property type="chains" value="C=1-1342"/>
</dbReference>
<dbReference type="PDB" id="7C17">
    <property type="method" value="EM"/>
    <property type="resolution" value="4.22 A"/>
    <property type="chains" value="C=1-1342"/>
</dbReference>
<dbReference type="PDB" id="7C97">
    <property type="method" value="EM"/>
    <property type="resolution" value="3.68 A"/>
    <property type="chains" value="C=1-1342"/>
</dbReference>
<dbReference type="PDB" id="7CHW">
    <property type="method" value="EM"/>
    <property type="resolution" value="3.58 A"/>
    <property type="chains" value="C=1-1342"/>
</dbReference>
<dbReference type="PDB" id="7DY6">
    <property type="method" value="EM"/>
    <property type="resolution" value="3.68 A"/>
    <property type="chains" value="C=1-1342"/>
</dbReference>
<dbReference type="PDB" id="7EGS">
    <property type="method" value="X-ray"/>
    <property type="resolution" value="1.70 A"/>
    <property type="chains" value="A=152-443"/>
</dbReference>
<dbReference type="PDB" id="7KHB">
    <property type="method" value="EM"/>
    <property type="resolution" value="3.53 A"/>
    <property type="chains" value="C=1-1342"/>
</dbReference>
<dbReference type="PDB" id="7KHC">
    <property type="method" value="EM"/>
    <property type="resolution" value="4.14 A"/>
    <property type="chains" value="C=1-1342"/>
</dbReference>
<dbReference type="PDB" id="7KHE">
    <property type="method" value="EM"/>
    <property type="resolution" value="3.58 A"/>
    <property type="chains" value="C=1-1342"/>
</dbReference>
<dbReference type="PDB" id="7KHI">
    <property type="method" value="EM"/>
    <property type="resolution" value="3.62 A"/>
    <property type="chains" value="C=1-1342"/>
</dbReference>
<dbReference type="PDB" id="7M8E">
    <property type="method" value="EM"/>
    <property type="resolution" value="3.40 A"/>
    <property type="chains" value="C=1-1342"/>
</dbReference>
<dbReference type="PDB" id="7MKD">
    <property type="method" value="EM"/>
    <property type="resolution" value="3.20 A"/>
    <property type="chains" value="I=1-1342"/>
</dbReference>
<dbReference type="PDB" id="7MKE">
    <property type="method" value="EM"/>
    <property type="resolution" value="3.70 A"/>
    <property type="chains" value="I=1-1342"/>
</dbReference>
<dbReference type="PDB" id="7MKI">
    <property type="method" value="EM"/>
    <property type="resolution" value="3.50 A"/>
    <property type="chains" value="I=1-1342"/>
</dbReference>
<dbReference type="PDB" id="7MKJ">
    <property type="method" value="EM"/>
    <property type="resolution" value="2.90 A"/>
    <property type="chains" value="I=1-1342"/>
</dbReference>
<dbReference type="PDB" id="7MKN">
    <property type="method" value="EM"/>
    <property type="resolution" value="3.30 A"/>
    <property type="chains" value="C=3-1342"/>
</dbReference>
<dbReference type="PDB" id="7MKO">
    <property type="method" value="EM"/>
    <property type="resolution" value="3.15 A"/>
    <property type="chains" value="C=3-1342"/>
</dbReference>
<dbReference type="PDB" id="7MKP">
    <property type="method" value="EM"/>
    <property type="resolution" value="3.41 A"/>
    <property type="chains" value="C=3-1342"/>
</dbReference>
<dbReference type="PDB" id="7MKQ">
    <property type="method" value="EM"/>
    <property type="resolution" value="4.80 A"/>
    <property type="chains" value="C=3-1342"/>
</dbReference>
<dbReference type="PDB" id="7N4E">
    <property type="method" value="EM"/>
    <property type="resolution" value="3.80 A"/>
    <property type="chains" value="C=1-1342"/>
</dbReference>
<dbReference type="PDB" id="7PY0">
    <property type="method" value="EM"/>
    <property type="resolution" value="4.50 A"/>
    <property type="chains" value="C=1-1342"/>
</dbReference>
<dbReference type="PDB" id="7PY1">
    <property type="method" value="EM"/>
    <property type="resolution" value="3.80 A"/>
    <property type="chains" value="C=1-1342"/>
</dbReference>
<dbReference type="PDB" id="7PY3">
    <property type="method" value="EM"/>
    <property type="resolution" value="3.80 A"/>
    <property type="chains" value="C=1-1342"/>
</dbReference>
<dbReference type="PDB" id="7PY5">
    <property type="method" value="EM"/>
    <property type="resolution" value="3.90 A"/>
    <property type="chains" value="C=1-1342"/>
</dbReference>
<dbReference type="PDB" id="7PY6">
    <property type="method" value="EM"/>
    <property type="resolution" value="4.10 A"/>
    <property type="chains" value="C=1-1342"/>
</dbReference>
<dbReference type="PDB" id="7PY7">
    <property type="method" value="EM"/>
    <property type="resolution" value="4.10 A"/>
    <property type="chains" value="C=1-1342"/>
</dbReference>
<dbReference type="PDB" id="7PY8">
    <property type="method" value="EM"/>
    <property type="resolution" value="3.80 A"/>
    <property type="chains" value="C=1-1342"/>
</dbReference>
<dbReference type="PDB" id="7PYJ">
    <property type="method" value="EM"/>
    <property type="resolution" value="4.20 A"/>
    <property type="chains" value="C=1-1342"/>
</dbReference>
<dbReference type="PDB" id="7PYK">
    <property type="method" value="EM"/>
    <property type="resolution" value="4.10 A"/>
    <property type="chains" value="C=1-1342"/>
</dbReference>
<dbReference type="PDB" id="7Q0J">
    <property type="method" value="EM"/>
    <property type="resolution" value="4.30 A"/>
    <property type="chains" value="C=1-1342"/>
</dbReference>
<dbReference type="PDB" id="7Q0K">
    <property type="method" value="EM"/>
    <property type="resolution" value="4.00 A"/>
    <property type="chains" value="C=1-1342"/>
</dbReference>
<dbReference type="PDB" id="7QV9">
    <property type="method" value="EM"/>
    <property type="resolution" value="3.50 A"/>
    <property type="chains" value="C=1-1342"/>
</dbReference>
<dbReference type="PDB" id="7QWP">
    <property type="method" value="EM"/>
    <property type="resolution" value="3.40 A"/>
    <property type="chains" value="C=1-1342"/>
</dbReference>
<dbReference type="PDB" id="7QXI">
    <property type="method" value="EM"/>
    <property type="resolution" value="3.40 A"/>
    <property type="chains" value="C=1-1342"/>
</dbReference>
<dbReference type="PDB" id="7SZJ">
    <property type="method" value="EM"/>
    <property type="resolution" value="3.11 A"/>
    <property type="chains" value="C=1-1342"/>
</dbReference>
<dbReference type="PDB" id="7SZK">
    <property type="method" value="EM"/>
    <property type="resolution" value="2.94 A"/>
    <property type="chains" value="C=1-1342"/>
</dbReference>
<dbReference type="PDB" id="7UBM">
    <property type="method" value="EM"/>
    <property type="resolution" value="3.13 A"/>
    <property type="chains" value="C=1-1342"/>
</dbReference>
<dbReference type="PDB" id="7UBN">
    <property type="method" value="EM"/>
    <property type="resolution" value="3.36 A"/>
    <property type="chains" value="C=1-1342"/>
</dbReference>
<dbReference type="PDB" id="7UWE">
    <property type="method" value="EM"/>
    <property type="resolution" value="2.90 A"/>
    <property type="chains" value="I=1-1342"/>
</dbReference>
<dbReference type="PDB" id="7UWH">
    <property type="method" value="EM"/>
    <property type="resolution" value="3.10 A"/>
    <property type="chains" value="I=1-1342"/>
</dbReference>
<dbReference type="PDB" id="7VWY">
    <property type="method" value="EM"/>
    <property type="resolution" value="4.57 A"/>
    <property type="chains" value="C=1-1342"/>
</dbReference>
<dbReference type="PDB" id="7VWZ">
    <property type="method" value="EM"/>
    <property type="resolution" value="4.00 A"/>
    <property type="chains" value="C=1-1342"/>
</dbReference>
<dbReference type="PDB" id="7W5W">
    <property type="method" value="EM"/>
    <property type="resolution" value="4.55 A"/>
    <property type="chains" value="C=1-1342"/>
</dbReference>
<dbReference type="PDB" id="7W5X">
    <property type="method" value="EM"/>
    <property type="resolution" value="3.40 A"/>
    <property type="chains" value="C=1-1342"/>
</dbReference>
<dbReference type="PDB" id="7W5Y">
    <property type="method" value="EM"/>
    <property type="resolution" value="4.20 A"/>
    <property type="chains" value="C=1-1342"/>
</dbReference>
<dbReference type="PDB" id="7XUE">
    <property type="method" value="EM"/>
    <property type="resolution" value="3.17 A"/>
    <property type="chains" value="I=1-1342"/>
</dbReference>
<dbReference type="PDB" id="7XUG">
    <property type="method" value="EM"/>
    <property type="resolution" value="3.57 A"/>
    <property type="chains" value="I=1-1342"/>
</dbReference>
<dbReference type="PDB" id="7XUI">
    <property type="method" value="EM"/>
    <property type="resolution" value="3.61 A"/>
    <property type="chains" value="I=1-1342"/>
</dbReference>
<dbReference type="PDB" id="7YP9">
    <property type="method" value="EM"/>
    <property type="resolution" value="3.58 A"/>
    <property type="chains" value="C=1-1342"/>
</dbReference>
<dbReference type="PDB" id="7YPA">
    <property type="method" value="EM"/>
    <property type="resolution" value="3.05 A"/>
    <property type="chains" value="C=1-1342"/>
</dbReference>
<dbReference type="PDB" id="7YPB">
    <property type="method" value="EM"/>
    <property type="resolution" value="3.48 A"/>
    <property type="chains" value="C=1-1342"/>
</dbReference>
<dbReference type="PDB" id="8ABY">
    <property type="method" value="EM"/>
    <property type="resolution" value="3.70 A"/>
    <property type="chains" value="C=1-1342"/>
</dbReference>
<dbReference type="PDB" id="8ABZ">
    <property type="method" value="EM"/>
    <property type="resolution" value="3.40 A"/>
    <property type="chains" value="C=1-1342"/>
</dbReference>
<dbReference type="PDB" id="8AC0">
    <property type="method" value="EM"/>
    <property type="resolution" value="4.10 A"/>
    <property type="chains" value="C=1-1342"/>
</dbReference>
<dbReference type="PDB" id="8AC1">
    <property type="method" value="EM"/>
    <property type="resolution" value="4.06 A"/>
    <property type="chains" value="C=1-1342"/>
</dbReference>
<dbReference type="PDB" id="8AC2">
    <property type="method" value="EM"/>
    <property type="resolution" value="3.70 A"/>
    <property type="chains" value="C=1-1342"/>
</dbReference>
<dbReference type="PDB" id="8ACP">
    <property type="method" value="EM"/>
    <property type="resolution" value="4.50 A"/>
    <property type="chains" value="C=1-1342"/>
</dbReference>
<dbReference type="PDB" id="8AD1">
    <property type="method" value="EM"/>
    <property type="resolution" value="4.10 A"/>
    <property type="chains" value="C=1-1342"/>
</dbReference>
<dbReference type="PDB" id="8E3F">
    <property type="method" value="EM"/>
    <property type="resolution" value="6.50 A"/>
    <property type="chains" value="A=1-1342"/>
</dbReference>
<dbReference type="PDB" id="8E5K">
    <property type="method" value="EM"/>
    <property type="resolution" value="4.20 A"/>
    <property type="chains" value="A=1-1342"/>
</dbReference>
<dbReference type="PDB" id="8E5O">
    <property type="method" value="EM"/>
    <property type="resolution" value="4.40 A"/>
    <property type="chains" value="A=1-1342"/>
</dbReference>
<dbReference type="PDB" id="8E6X">
    <property type="method" value="EM"/>
    <property type="resolution" value="4.27 A"/>
    <property type="chains" value="A=1-1342"/>
</dbReference>
<dbReference type="PDB" id="8E6Z">
    <property type="method" value="EM"/>
    <property type="resolution" value="4.10 A"/>
    <property type="chains" value="A=1-1342"/>
</dbReference>
<dbReference type="PDB" id="8EG7">
    <property type="method" value="EM"/>
    <property type="resolution" value="3.20 A"/>
    <property type="chains" value="I=1-1342"/>
</dbReference>
<dbReference type="PDB" id="8EG8">
    <property type="method" value="EM"/>
    <property type="resolution" value="3.30 A"/>
    <property type="chains" value="I=1-1342"/>
</dbReference>
<dbReference type="PDB" id="8EGB">
    <property type="method" value="EM"/>
    <property type="resolution" value="3.80 A"/>
    <property type="chains" value="I=1-1342"/>
</dbReference>
<dbReference type="PDB" id="8EH8">
    <property type="method" value="EM"/>
    <property type="resolution" value="3.40 A"/>
    <property type="chains" value="I=1-1342"/>
</dbReference>
<dbReference type="PDB" id="8EH9">
    <property type="method" value="EM"/>
    <property type="resolution" value="3.90 A"/>
    <property type="chains" value="I=1-1342"/>
</dbReference>
<dbReference type="PDB" id="8EHA">
    <property type="method" value="EM"/>
    <property type="resolution" value="3.70 A"/>
    <property type="chains" value="I=1-1342"/>
</dbReference>
<dbReference type="PDB" id="8EHF">
    <property type="method" value="EM"/>
    <property type="resolution" value="3.30 A"/>
    <property type="chains" value="I=1-1342"/>
</dbReference>
<dbReference type="PDB" id="8EHI">
    <property type="method" value="EM"/>
    <property type="resolution" value="5.50 A"/>
    <property type="chains" value="I=1-1342"/>
</dbReference>
<dbReference type="PDB" id="8F1I">
    <property type="method" value="EM"/>
    <property type="resolution" value="3.00 A"/>
    <property type="chains" value="I=1-1342"/>
</dbReference>
<dbReference type="PDB" id="8F1J">
    <property type="method" value="EM"/>
    <property type="resolution" value="2.60 A"/>
    <property type="chains" value="I=1-1342"/>
</dbReference>
<dbReference type="PDB" id="8F1K">
    <property type="method" value="EM"/>
    <property type="resolution" value="2.80 A"/>
    <property type="chains" value="I=1-1342"/>
</dbReference>
<dbReference type="PDB" id="8F3C">
    <property type="method" value="EM"/>
    <property type="resolution" value="3.40 A"/>
    <property type="chains" value="I=1-1342"/>
</dbReference>
<dbReference type="PDB" id="8FIX">
    <property type="method" value="EM"/>
    <property type="resolution" value="3.90 A"/>
    <property type="chains" value="C=1-1342"/>
</dbReference>
<dbReference type="PDB" id="8FIY">
    <property type="method" value="EM"/>
    <property type="resolution" value="7.30 A"/>
    <property type="chains" value="C=1-1342"/>
</dbReference>
<dbReference type="PDB" id="8FTD">
    <property type="method" value="EM"/>
    <property type="resolution" value="2.76 A"/>
    <property type="chains" value="I=1-1342"/>
</dbReference>
<dbReference type="PDB" id="8FVR">
    <property type="method" value="EM"/>
    <property type="resolution" value="2.42 A"/>
    <property type="chains" value="F=1-1342"/>
</dbReference>
<dbReference type="PDB" id="8FVW">
    <property type="method" value="EM"/>
    <property type="resolution" value="2.10 A"/>
    <property type="chains" value="F=1-1342"/>
</dbReference>
<dbReference type="PDB" id="8G00">
    <property type="method" value="EM"/>
    <property type="resolution" value="3.40 A"/>
    <property type="chains" value="I=1-1342"/>
</dbReference>
<dbReference type="PDB" id="8G1S">
    <property type="method" value="EM"/>
    <property type="resolution" value="3.70 A"/>
    <property type="chains" value="I=1-1342"/>
</dbReference>
<dbReference type="PDB" id="8G2W">
    <property type="method" value="EM"/>
    <property type="resolution" value="3.70 A"/>
    <property type="chains" value="I=2-1341"/>
</dbReference>
<dbReference type="PDB" id="8G4W">
    <property type="method" value="EM"/>
    <property type="resolution" value="3.80 A"/>
    <property type="chains" value="I=2-1341"/>
</dbReference>
<dbReference type="PDB" id="8G7E">
    <property type="method" value="EM"/>
    <property type="resolution" value="3.90 A"/>
    <property type="chains" value="I=1-1341"/>
</dbReference>
<dbReference type="PDB" id="8G8Z">
    <property type="method" value="EM"/>
    <property type="resolution" value="4.30 A"/>
    <property type="chains" value="I=2-1341"/>
</dbReference>
<dbReference type="PDB" id="8HKC">
    <property type="method" value="EM"/>
    <property type="resolution" value="2.49 A"/>
    <property type="chains" value="C=2-1342"/>
</dbReference>
<dbReference type="PDB" id="8IGR">
    <property type="method" value="EM"/>
    <property type="resolution" value="3.10 A"/>
    <property type="chains" value="I=1-1342"/>
</dbReference>
<dbReference type="PDB" id="8IGS">
    <property type="method" value="EM"/>
    <property type="resolution" value="3.40 A"/>
    <property type="chains" value="I=1-1342"/>
</dbReference>
<dbReference type="PDB" id="8JO2">
    <property type="method" value="EM"/>
    <property type="resolution" value="2.74 A"/>
    <property type="chains" value="C=1-1342"/>
</dbReference>
<dbReference type="PDB" id="8K58">
    <property type="method" value="EM"/>
    <property type="resolution" value="3.15 A"/>
    <property type="chains" value="C=3-1342"/>
</dbReference>
<dbReference type="PDB" id="8K59">
    <property type="method" value="EM"/>
    <property type="resolution" value="3.50 A"/>
    <property type="chains" value="C=3-1342"/>
</dbReference>
<dbReference type="PDB" id="8K5A">
    <property type="method" value="EM"/>
    <property type="resolution" value="3.30 A"/>
    <property type="chains" value="C=3-1342"/>
</dbReference>
<dbReference type="PDB" id="8PBL">
    <property type="method" value="EM"/>
    <property type="resolution" value="2.87 A"/>
    <property type="chains" value="F=1-1342"/>
</dbReference>
<dbReference type="PDB" id="8PDY">
    <property type="method" value="EM"/>
    <property type="resolution" value="2.80 A"/>
    <property type="chains" value="I=1-1342"/>
</dbReference>
<dbReference type="PDB" id="8PEN">
    <property type="method" value="EM"/>
    <property type="resolution" value="3.10 A"/>
    <property type="chains" value="I=1-1342"/>
</dbReference>
<dbReference type="PDB" id="8PFG">
    <property type="method" value="EM"/>
    <property type="resolution" value="3.10 A"/>
    <property type="chains" value="I=1-1342"/>
</dbReference>
<dbReference type="PDB" id="8PFJ">
    <property type="method" value="EM"/>
    <property type="resolution" value="3.40 A"/>
    <property type="chains" value="I=1-1342"/>
</dbReference>
<dbReference type="PDB" id="8PH9">
    <property type="method" value="EM"/>
    <property type="resolution" value="3.00 A"/>
    <property type="chains" value="I=1-1342"/>
</dbReference>
<dbReference type="PDB" id="8PHK">
    <property type="method" value="EM"/>
    <property type="resolution" value="3.10 A"/>
    <property type="chains" value="I=1-1342"/>
</dbReference>
<dbReference type="PDB" id="8PIB">
    <property type="method" value="EM"/>
    <property type="resolution" value="2.60 A"/>
    <property type="chains" value="I=1-1342"/>
</dbReference>
<dbReference type="PDB" id="8PID">
    <property type="method" value="EM"/>
    <property type="resolution" value="3.00 A"/>
    <property type="chains" value="I=1-1342"/>
</dbReference>
<dbReference type="PDB" id="8PIL">
    <property type="method" value="EM"/>
    <property type="resolution" value="3.20 A"/>
    <property type="chains" value="I=1-1342"/>
</dbReference>
<dbReference type="PDB" id="8PIM">
    <property type="method" value="EM"/>
    <property type="resolution" value="3.40 A"/>
    <property type="chains" value="I=1-1342"/>
</dbReference>
<dbReference type="PDB" id="8RE4">
    <property type="method" value="EM"/>
    <property type="resolution" value="2.80 A"/>
    <property type="chains" value="C=1-1341"/>
</dbReference>
<dbReference type="PDB" id="8REA">
    <property type="method" value="EM"/>
    <property type="resolution" value="3.40 A"/>
    <property type="chains" value="C=1-1341"/>
</dbReference>
<dbReference type="PDB" id="8REB">
    <property type="method" value="EM"/>
    <property type="resolution" value="3.40 A"/>
    <property type="chains" value="C=1-1341"/>
</dbReference>
<dbReference type="PDB" id="8REC">
    <property type="method" value="EM"/>
    <property type="resolution" value="3.50 A"/>
    <property type="chains" value="C=1-1341"/>
</dbReference>
<dbReference type="PDB" id="8RED">
    <property type="method" value="EM"/>
    <property type="resolution" value="3.90 A"/>
    <property type="chains" value="C=1-1341"/>
</dbReference>
<dbReference type="PDB" id="8REE">
    <property type="method" value="EM"/>
    <property type="resolution" value="3.80 A"/>
    <property type="chains" value="C=1-1341"/>
</dbReference>
<dbReference type="PDB" id="8SY5">
    <property type="method" value="EM"/>
    <property type="resolution" value="2.70 A"/>
    <property type="chains" value="I=1-1342"/>
</dbReference>
<dbReference type="PDB" id="8SY6">
    <property type="method" value="EM"/>
    <property type="resolution" value="3.28 A"/>
    <property type="chains" value="I=1-1342"/>
</dbReference>
<dbReference type="PDB" id="8SY7">
    <property type="method" value="EM"/>
    <property type="resolution" value="2.65 A"/>
    <property type="chains" value="I=1-1342"/>
</dbReference>
<dbReference type="PDB" id="8TO1">
    <property type="method" value="EM"/>
    <property type="resolution" value="2.80 A"/>
    <property type="chains" value="I=1-1342"/>
</dbReference>
<dbReference type="PDB" id="8TO6">
    <property type="method" value="EM"/>
    <property type="resolution" value="2.90 A"/>
    <property type="chains" value="I=1-1342"/>
</dbReference>
<dbReference type="PDB" id="8TO8">
    <property type="method" value="EM"/>
    <property type="resolution" value="2.90 A"/>
    <property type="chains" value="I=1-1342"/>
</dbReference>
<dbReference type="PDB" id="8TOE">
    <property type="method" value="EM"/>
    <property type="resolution" value="2.90 A"/>
    <property type="chains" value="I=1-1342"/>
</dbReference>
<dbReference type="PDB" id="8TOM">
    <property type="method" value="EM"/>
    <property type="resolution" value="3.10 A"/>
    <property type="chains" value="I=1-1342"/>
</dbReference>
<dbReference type="PDB" id="8TXO">
    <property type="method" value="EM"/>
    <property type="resolution" value="3.10 A"/>
    <property type="chains" value="I=1-1342"/>
</dbReference>
<dbReference type="PDB" id="8U3B">
    <property type="method" value="EM"/>
    <property type="resolution" value="3.23 A"/>
    <property type="chains" value="C=1-1342"/>
</dbReference>
<dbReference type="PDB" id="8UPO">
    <property type="method" value="EM"/>
    <property type="resolution" value="5.50 A"/>
    <property type="chains" value="AA=1-1342"/>
</dbReference>
<dbReference type="PDB" id="8UPR">
    <property type="method" value="EM"/>
    <property type="resolution" value="5.30 A"/>
    <property type="chains" value="AA=1-1342"/>
</dbReference>
<dbReference type="PDB" id="8UQL">
    <property type="method" value="EM"/>
    <property type="resolution" value="3.20 A"/>
    <property type="chains" value="AA=1-1342"/>
</dbReference>
<dbReference type="PDB" id="8UQM">
    <property type="method" value="EM"/>
    <property type="resolution" value="5.30 A"/>
    <property type="chains" value="AA=1-1342"/>
</dbReference>
<dbReference type="PDB" id="8UQP">
    <property type="method" value="EM"/>
    <property type="resolution" value="3.80 A"/>
    <property type="chains" value="AA=1-1342"/>
</dbReference>
<dbReference type="PDB" id="8UR0">
    <property type="method" value="EM"/>
    <property type="resolution" value="3.40 A"/>
    <property type="chains" value="AA=1-1342"/>
</dbReference>
<dbReference type="PDB" id="8URH">
    <property type="method" value="EM"/>
    <property type="resolution" value="5.70 A"/>
    <property type="chains" value="AA=1-1342"/>
</dbReference>
<dbReference type="PDB" id="8URI">
    <property type="method" value="EM"/>
    <property type="resolution" value="5.30 A"/>
    <property type="chains" value="AA=1-1342"/>
</dbReference>
<dbReference type="PDB" id="8URX">
    <property type="method" value="EM"/>
    <property type="resolution" value="6.60 A"/>
    <property type="chains" value="AA=1-1342"/>
</dbReference>
<dbReference type="PDB" id="8URY">
    <property type="method" value="EM"/>
    <property type="resolution" value="3.10 A"/>
    <property type="chains" value="AA=1-1342"/>
</dbReference>
<dbReference type="PDB" id="8Y6U">
    <property type="method" value="EM"/>
    <property type="resolution" value="3.97 A"/>
    <property type="chains" value="C=1-1342"/>
</dbReference>
<dbReference type="PDB" id="9DR1">
    <property type="method" value="EM"/>
    <property type="resolution" value="3.70 A"/>
    <property type="chains" value="I=2-1341"/>
</dbReference>
<dbReference type="PDB" id="9GUR">
    <property type="method" value="EM"/>
    <property type="resolution" value="4.20 A"/>
    <property type="chains" value="3=1-1342"/>
</dbReference>
<dbReference type="PDB" id="9GUW">
    <property type="method" value="EM"/>
    <property type="resolution" value="3.10 A"/>
    <property type="chains" value="3=1-1342"/>
</dbReference>
<dbReference type="PDB" id="9GUX">
    <property type="method" value="EM"/>
    <property type="resolution" value="3.30 A"/>
    <property type="chains" value="3=1-1342"/>
</dbReference>
<dbReference type="PDB" id="9Q96">
    <property type="method" value="EM"/>
    <property type="resolution" value="4.60 A"/>
    <property type="chains" value="C=1-1342"/>
</dbReference>
<dbReference type="PDBsum" id="3IYD"/>
<dbReference type="PDBsum" id="3LTI"/>
<dbReference type="PDBsum" id="3LU0"/>
<dbReference type="PDBsum" id="3T72"/>
<dbReference type="PDBsum" id="3TBI"/>
<dbReference type="PDBsum" id="4JK1"/>
<dbReference type="PDBsum" id="4JK2"/>
<dbReference type="PDBsum" id="4KMU"/>
<dbReference type="PDBsum" id="4KN4"/>
<dbReference type="PDBsum" id="4KN7"/>
<dbReference type="PDBsum" id="4MEX"/>
<dbReference type="PDBsum" id="4MEY"/>
<dbReference type="PDBsum" id="4S20"/>
<dbReference type="PDBsum" id="4XSX"/>
<dbReference type="PDBsum" id="4XSY"/>
<dbReference type="PDBsum" id="4XSZ"/>
<dbReference type="PDBsum" id="4YG2"/>
<dbReference type="PDBsum" id="4YLN"/>
<dbReference type="PDBsum" id="4YLO"/>
<dbReference type="PDBsum" id="4YLP"/>
<dbReference type="PDBsum" id="4ZH2"/>
<dbReference type="PDBsum" id="4ZH3"/>
<dbReference type="PDBsum" id="4ZH4"/>
<dbReference type="PDBsum" id="5EZK"/>
<dbReference type="PDBsum" id="5IPL"/>
<dbReference type="PDBsum" id="5IPM"/>
<dbReference type="PDBsum" id="5IPN"/>
<dbReference type="PDBsum" id="5MS0"/>
<dbReference type="PDBsum" id="5MY1"/>
<dbReference type="PDBsum" id="5NSR"/>
<dbReference type="PDBsum" id="5NSS"/>
<dbReference type="PDBsum" id="5NWT"/>
<dbReference type="PDBsum" id="5TBZ"/>
<dbReference type="PDBsum" id="5UAC"/>
<dbReference type="PDBsum" id="5UAG"/>
<dbReference type="PDBsum" id="5UAH"/>
<dbReference type="PDBsum" id="5UAJ"/>
<dbReference type="PDBsum" id="5UAL"/>
<dbReference type="PDBsum" id="5UAQ"/>
<dbReference type="PDBsum" id="5UI8"/>
<dbReference type="PDBsum" id="5VSW"/>
<dbReference type="PDBsum" id="5VT0"/>
<dbReference type="PDBsum" id="5W1S"/>
<dbReference type="PDBsum" id="5W1T"/>
<dbReference type="PDBsum" id="6ALF"/>
<dbReference type="PDBsum" id="6ALG"/>
<dbReference type="PDBsum" id="6ALH"/>
<dbReference type="PDBsum" id="6ASX"/>
<dbReference type="PDBsum" id="6AWB"/>
<dbReference type="PDBsum" id="6AWC"/>
<dbReference type="PDBsum" id="6AWD"/>
<dbReference type="PDBsum" id="6B6H"/>
<dbReference type="PDBsum" id="6BJS"/>
<dbReference type="PDBsum" id="6BYU"/>
<dbReference type="PDBsum" id="6C6S"/>
<dbReference type="PDBsum" id="6C6T"/>
<dbReference type="PDBsum" id="6C6U"/>
<dbReference type="PDBsum" id="6C9Y"/>
<dbReference type="PDBsum" id="6CA0"/>
<dbReference type="PDBsum" id="6CUX"/>
<dbReference type="PDBsum" id="6FLP"/>
<dbReference type="PDBsum" id="6FLQ"/>
<dbReference type="PDBsum" id="6GFW"/>
<dbReference type="PDBsum" id="6GH5"/>
<dbReference type="PDBsum" id="6GH6"/>
<dbReference type="PDBsum" id="6GOV"/>
<dbReference type="PDBsum" id="6JBQ"/>
<dbReference type="PDBsum" id="6JNX"/>
<dbReference type="PDBsum" id="6K4Y"/>
<dbReference type="PDBsum" id="6KJ6"/>
<dbReference type="PDBsum" id="6LDI"/>
<dbReference type="PDBsum" id="6N4C"/>
<dbReference type="PDBsum" id="6N57"/>
<dbReference type="PDBsum" id="6N58"/>
<dbReference type="PDBsum" id="6N60"/>
<dbReference type="PDBsum" id="6N61"/>
<dbReference type="PDBsum" id="6N62"/>
<dbReference type="PDBsum" id="6OMF"/>
<dbReference type="PDBsum" id="6OUL"/>
<dbReference type="PDBsum" id="6P18"/>
<dbReference type="PDBsum" id="6P19"/>
<dbReference type="PDBsum" id="6P1K"/>
<dbReference type="PDBsum" id="6PB4"/>
<dbReference type="PDBsum" id="6PB5"/>
<dbReference type="PDBsum" id="6PB6"/>
<dbReference type="PDBsum" id="6PMI"/>
<dbReference type="PDBsum" id="6PMJ"/>
<dbReference type="PDBsum" id="6PSQ"/>
<dbReference type="PDBsum" id="6PSR"/>
<dbReference type="PDBsum" id="6PSS"/>
<dbReference type="PDBsum" id="6PST"/>
<dbReference type="PDBsum" id="6PSU"/>
<dbReference type="PDBsum" id="6PSV"/>
<dbReference type="PDBsum" id="6PSW"/>
<dbReference type="PDBsum" id="6R9B"/>
<dbReference type="PDBsum" id="6R9G"/>
<dbReference type="PDBsum" id="6RH3"/>
<dbReference type="PDBsum" id="6RI7"/>
<dbReference type="PDBsum" id="6RI9"/>
<dbReference type="PDBsum" id="6RIN"/>
<dbReference type="PDBsum" id="6RIP"/>
<dbReference type="PDBsum" id="6TQN"/>
<dbReference type="PDBsum" id="6TQO"/>
<dbReference type="PDBsum" id="6UTV"/>
<dbReference type="PDBsum" id="6UTW"/>
<dbReference type="PDBsum" id="6UTX"/>
<dbReference type="PDBsum" id="6UTY"/>
<dbReference type="PDBsum" id="6UTZ"/>
<dbReference type="PDBsum" id="6UU0"/>
<dbReference type="PDBsum" id="6UU1"/>
<dbReference type="PDBsum" id="6UU2"/>
<dbReference type="PDBsum" id="6UU3"/>
<dbReference type="PDBsum" id="6UU4"/>
<dbReference type="PDBsum" id="6UU5"/>
<dbReference type="PDBsum" id="6UU6"/>
<dbReference type="PDBsum" id="6UU7"/>
<dbReference type="PDBsum" id="6UU8"/>
<dbReference type="PDBsum" id="6UU9"/>
<dbReference type="PDBsum" id="6UUA"/>
<dbReference type="PDBsum" id="6UUB"/>
<dbReference type="PDBsum" id="6UUC"/>
<dbReference type="PDBsum" id="6VJS"/>
<dbReference type="PDBsum" id="6VU3"/>
<dbReference type="PDBsum" id="6VYQ"/>
<dbReference type="PDBsum" id="6VYR"/>
<dbReference type="PDBsum" id="6VYS"/>
<dbReference type="PDBsum" id="6VYT"/>
<dbReference type="PDBsum" id="6VYU"/>
<dbReference type="PDBsum" id="6VYW"/>
<dbReference type="PDBsum" id="6VYX"/>
<dbReference type="PDBsum" id="6VYY"/>
<dbReference type="PDBsum" id="6VYZ"/>
<dbReference type="PDBsum" id="6VZ2"/>
<dbReference type="PDBsum" id="6VZ3"/>
<dbReference type="PDBsum" id="6VZ5"/>
<dbReference type="PDBsum" id="6VZ7"/>
<dbReference type="PDBsum" id="6VZJ"/>
<dbReference type="PDBsum" id="6WMU"/>
<dbReference type="PDBsum" id="6X26"/>
<dbReference type="PDBsum" id="6X2F"/>
<dbReference type="PDBsum" id="6X2N"/>
<dbReference type="PDBsum" id="6X43"/>
<dbReference type="PDBsum" id="6X4W"/>
<dbReference type="PDBsum" id="6X4Y"/>
<dbReference type="PDBsum" id="6X50"/>
<dbReference type="PDBsum" id="6X6T"/>
<dbReference type="PDBsum" id="6X7F"/>
<dbReference type="PDBsum" id="6X7K"/>
<dbReference type="PDBsum" id="6X9Q"/>
<dbReference type="PDBsum" id="6XAS"/>
<dbReference type="PDBsum" id="6XAV"/>
<dbReference type="PDBsum" id="6XDQ"/>
<dbReference type="PDBsum" id="6XDR"/>
<dbReference type="PDBsum" id="6XGF"/>
<dbReference type="PDBsum" id="6XH7"/>
<dbReference type="PDBsum" id="6XH8"/>
<dbReference type="PDBsum" id="6XII"/>
<dbReference type="PDBsum" id="6XIJ"/>
<dbReference type="PDBsum" id="6XL5"/>
<dbReference type="PDBsum" id="6XL9"/>
<dbReference type="PDBsum" id="6XLJ"/>
<dbReference type="PDBsum" id="6XLL"/>
<dbReference type="PDBsum" id="6XLM"/>
<dbReference type="PDBsum" id="6XLN"/>
<dbReference type="PDBsum" id="6Z9P"/>
<dbReference type="PDBsum" id="6Z9Q"/>
<dbReference type="PDBsum" id="6Z9R"/>
<dbReference type="PDBsum" id="6Z9S"/>
<dbReference type="PDBsum" id="6Z9T"/>
<dbReference type="PDBsum" id="6ZTJ"/>
<dbReference type="PDBsum" id="6ZTL"/>
<dbReference type="PDBsum" id="6ZTM"/>
<dbReference type="PDBsum" id="6ZTN"/>
<dbReference type="PDBsum" id="6ZTO"/>
<dbReference type="PDBsum" id="6ZTP"/>
<dbReference type="PDBsum" id="6ZU1"/>
<dbReference type="PDBsum" id="7ADB"/>
<dbReference type="PDBsum" id="7ADC"/>
<dbReference type="PDBsum" id="7ADD"/>
<dbReference type="PDBsum" id="7ADE"/>
<dbReference type="PDBsum" id="7BEF"/>
<dbReference type="PDBsum" id="7BEG"/>
<dbReference type="PDBsum" id="7C17"/>
<dbReference type="PDBsum" id="7C97"/>
<dbReference type="PDBsum" id="7CHW"/>
<dbReference type="PDBsum" id="7DY6"/>
<dbReference type="PDBsum" id="7EGS"/>
<dbReference type="PDBsum" id="7KHB"/>
<dbReference type="PDBsum" id="7KHC"/>
<dbReference type="PDBsum" id="7KHE"/>
<dbReference type="PDBsum" id="7KHI"/>
<dbReference type="PDBsum" id="7M8E"/>
<dbReference type="PDBsum" id="7MKD"/>
<dbReference type="PDBsum" id="7MKE"/>
<dbReference type="PDBsum" id="7MKI"/>
<dbReference type="PDBsum" id="7MKJ"/>
<dbReference type="PDBsum" id="7MKN"/>
<dbReference type="PDBsum" id="7MKO"/>
<dbReference type="PDBsum" id="7MKP"/>
<dbReference type="PDBsum" id="7MKQ"/>
<dbReference type="PDBsum" id="7N4E"/>
<dbReference type="PDBsum" id="7PY0"/>
<dbReference type="PDBsum" id="7PY1"/>
<dbReference type="PDBsum" id="7PY3"/>
<dbReference type="PDBsum" id="7PY5"/>
<dbReference type="PDBsum" id="7PY6"/>
<dbReference type="PDBsum" id="7PY7"/>
<dbReference type="PDBsum" id="7PY8"/>
<dbReference type="PDBsum" id="7PYJ"/>
<dbReference type="PDBsum" id="7PYK"/>
<dbReference type="PDBsum" id="7Q0J"/>
<dbReference type="PDBsum" id="7Q0K"/>
<dbReference type="PDBsum" id="7QV9"/>
<dbReference type="PDBsum" id="7QWP"/>
<dbReference type="PDBsum" id="7QXI"/>
<dbReference type="PDBsum" id="7SZJ"/>
<dbReference type="PDBsum" id="7SZK"/>
<dbReference type="PDBsum" id="7UBM"/>
<dbReference type="PDBsum" id="7UBN"/>
<dbReference type="PDBsum" id="7UWE"/>
<dbReference type="PDBsum" id="7UWH"/>
<dbReference type="PDBsum" id="7VWY"/>
<dbReference type="PDBsum" id="7VWZ"/>
<dbReference type="PDBsum" id="7W5W"/>
<dbReference type="PDBsum" id="7W5X"/>
<dbReference type="PDBsum" id="7W5Y"/>
<dbReference type="PDBsum" id="7XUE"/>
<dbReference type="PDBsum" id="7XUG"/>
<dbReference type="PDBsum" id="7XUI"/>
<dbReference type="PDBsum" id="7YP9"/>
<dbReference type="PDBsum" id="7YPA"/>
<dbReference type="PDBsum" id="7YPB"/>
<dbReference type="PDBsum" id="8ABY"/>
<dbReference type="PDBsum" id="8ABZ"/>
<dbReference type="PDBsum" id="8AC0"/>
<dbReference type="PDBsum" id="8AC1"/>
<dbReference type="PDBsum" id="8AC2"/>
<dbReference type="PDBsum" id="8ACP"/>
<dbReference type="PDBsum" id="8AD1"/>
<dbReference type="PDBsum" id="8E3F"/>
<dbReference type="PDBsum" id="8E5K"/>
<dbReference type="PDBsum" id="8E5O"/>
<dbReference type="PDBsum" id="8E6X"/>
<dbReference type="PDBsum" id="8E6Z"/>
<dbReference type="PDBsum" id="8EG7"/>
<dbReference type="PDBsum" id="8EG8"/>
<dbReference type="PDBsum" id="8EGB"/>
<dbReference type="PDBsum" id="8EH8"/>
<dbReference type="PDBsum" id="8EH9"/>
<dbReference type="PDBsum" id="8EHA"/>
<dbReference type="PDBsum" id="8EHF"/>
<dbReference type="PDBsum" id="8EHI"/>
<dbReference type="PDBsum" id="8F1I"/>
<dbReference type="PDBsum" id="8F1J"/>
<dbReference type="PDBsum" id="8F1K"/>
<dbReference type="PDBsum" id="8F3C"/>
<dbReference type="PDBsum" id="8FIX"/>
<dbReference type="PDBsum" id="8FIY"/>
<dbReference type="PDBsum" id="8FTD"/>
<dbReference type="PDBsum" id="8FVR"/>
<dbReference type="PDBsum" id="8FVW"/>
<dbReference type="PDBsum" id="8G00"/>
<dbReference type="PDBsum" id="8G1S"/>
<dbReference type="PDBsum" id="8G2W"/>
<dbReference type="PDBsum" id="8G4W"/>
<dbReference type="PDBsum" id="8G7E"/>
<dbReference type="PDBsum" id="8G8Z"/>
<dbReference type="PDBsum" id="8HKC"/>
<dbReference type="PDBsum" id="8IGR"/>
<dbReference type="PDBsum" id="8IGS"/>
<dbReference type="PDBsum" id="8JO2"/>
<dbReference type="PDBsum" id="8K58"/>
<dbReference type="PDBsum" id="8K59"/>
<dbReference type="PDBsum" id="8K5A"/>
<dbReference type="PDBsum" id="8PBL"/>
<dbReference type="PDBsum" id="8PDY"/>
<dbReference type="PDBsum" id="8PEN"/>
<dbReference type="PDBsum" id="8PFG"/>
<dbReference type="PDBsum" id="8PFJ"/>
<dbReference type="PDBsum" id="8PH9"/>
<dbReference type="PDBsum" id="8PHK"/>
<dbReference type="PDBsum" id="8PIB"/>
<dbReference type="PDBsum" id="8PID"/>
<dbReference type="PDBsum" id="8PIL"/>
<dbReference type="PDBsum" id="8PIM"/>
<dbReference type="PDBsum" id="8RE4"/>
<dbReference type="PDBsum" id="8REA"/>
<dbReference type="PDBsum" id="8REB"/>
<dbReference type="PDBsum" id="8REC"/>
<dbReference type="PDBsum" id="8RED"/>
<dbReference type="PDBsum" id="8REE"/>
<dbReference type="PDBsum" id="8SY5"/>
<dbReference type="PDBsum" id="8SY6"/>
<dbReference type="PDBsum" id="8SY7"/>
<dbReference type="PDBsum" id="8TO1"/>
<dbReference type="PDBsum" id="8TO6"/>
<dbReference type="PDBsum" id="8TO8"/>
<dbReference type="PDBsum" id="8TOE"/>
<dbReference type="PDBsum" id="8TOM"/>
<dbReference type="PDBsum" id="8TXO"/>
<dbReference type="PDBsum" id="8U3B"/>
<dbReference type="PDBsum" id="8UPO"/>
<dbReference type="PDBsum" id="8UPR"/>
<dbReference type="PDBsum" id="8UQL"/>
<dbReference type="PDBsum" id="8UQM"/>
<dbReference type="PDBsum" id="8UQP"/>
<dbReference type="PDBsum" id="8UR0"/>
<dbReference type="PDBsum" id="8URH"/>
<dbReference type="PDBsum" id="8URI"/>
<dbReference type="PDBsum" id="8URX"/>
<dbReference type="PDBsum" id="8URY"/>
<dbReference type="PDBsum" id="8Y6U"/>
<dbReference type="PDBsum" id="9DR1"/>
<dbReference type="PDBsum" id="9GUR"/>
<dbReference type="PDBsum" id="9GUW"/>
<dbReference type="PDBsum" id="9GUX"/>
<dbReference type="PDBsum" id="9Q96"/>
<dbReference type="EMDB" id="EMD-0001"/>
<dbReference type="EMDB" id="EMD-0002"/>
<dbReference type="EMDB" id="EMD-0348"/>
<dbReference type="EMDB" id="EMD-0349"/>
<dbReference type="EMDB" id="EMD-0700"/>
<dbReference type="EMDB" id="EMD-0874"/>
<dbReference type="EMDB" id="EMD-11419"/>
<dbReference type="EMDB" id="EMD-12156"/>
<dbReference type="EMDB" id="EMD-14171"/>
<dbReference type="EMDB" id="EMD-14172"/>
<dbReference type="EMDB" id="EMD-14190"/>
<dbReference type="EMDB" id="EMD-14200"/>
<dbReference type="EMDB" id="EMD-15327"/>
<dbReference type="EMDB" id="EMD-15328"/>
<dbReference type="EMDB" id="EMD-15329"/>
<dbReference type="EMDB" id="EMD-15330"/>
<dbReference type="EMDB" id="EMD-15331"/>
<dbReference type="EMDB" id="EMD-15352"/>
<dbReference type="EMDB" id="EMD-15357"/>
<dbReference type="EMDB" id="EMD-17626"/>
<dbReference type="EMDB" id="EMD-17632"/>
<dbReference type="EMDB" id="EMD-17646"/>
<dbReference type="EMDB" id="EMD-17647"/>
<dbReference type="EMDB" id="EMD-17657"/>
<dbReference type="EMDB" id="EMD-17668"/>
<dbReference type="EMDB" id="EMD-17679"/>
<dbReference type="EMDB" id="EMD-17681"/>
<dbReference type="EMDB" id="EMD-17685"/>
<dbReference type="EMDB" id="EMD-17686"/>
<dbReference type="EMDB" id="EMD-19079"/>
<dbReference type="EMDB" id="EMD-19080"/>
<dbReference type="EMDB" id="EMD-19081"/>
<dbReference type="EMDB" id="EMD-19082"/>
<dbReference type="EMDB" id="EMD-19083"/>
<dbReference type="EMDB" id="EMD-19084"/>
<dbReference type="EMDB" id="EMD-20233"/>
<dbReference type="EMDB" id="EMD-20234"/>
<dbReference type="EMDB" id="EMD-21879"/>
<dbReference type="EMDB" id="EMD-21881"/>
<dbReference type="EMDB" id="EMD-21883"/>
<dbReference type="EMDB" id="EMD-22114"/>
<dbReference type="EMDB" id="EMD-22115"/>
<dbReference type="EMDB" id="EMD-25570"/>
<dbReference type="EMDB" id="EMD-25571"/>
<dbReference type="EMDB" id="EMD-28783"/>
<dbReference type="EMDB" id="EMD-28786"/>
<dbReference type="EMDB" id="EMD-28792"/>
<dbReference type="EMDB" id="EMD-28845"/>
<dbReference type="EMDB" id="EMD-29212"/>
<dbReference type="EMDB" id="EMD-29213"/>
<dbReference type="EMDB" id="EMD-29423"/>
<dbReference type="EMDB" id="EMD-29491"/>
<dbReference type="EMDB" id="EMD-29494"/>
<dbReference type="EMDB" id="EMD-29640"/>
<dbReference type="EMDB" id="EMD-29676"/>
<dbReference type="EMDB" id="EMD-30268"/>
<dbReference type="EMDB" id="EMD-30307"/>
<dbReference type="EMDB" id="EMD-30376"/>
<dbReference type="EMDB" id="EMD-30914"/>
<dbReference type="EMDB" id="EMD-32165"/>
<dbReference type="EMDB" id="EMD-32166"/>
<dbReference type="EMDB" id="EMD-32322"/>
<dbReference type="EMDB" id="EMD-32323"/>
<dbReference type="EMDB" id="EMD-32324"/>
<dbReference type="EMDB" id="EMD-33466"/>
<dbReference type="EMDB" id="EMD-33468"/>
<dbReference type="EMDB" id="EMD-33470"/>
<dbReference type="EMDB" id="EMD-33996"/>
<dbReference type="EMDB" id="EMD-33997"/>
<dbReference type="EMDB" id="EMD-33998"/>
<dbReference type="EMDB" id="EMD-34849"/>
<dbReference type="EMDB" id="EMD-35438"/>
<dbReference type="EMDB" id="EMD-35439"/>
<dbReference type="EMDB" id="EMD-3561"/>
<dbReference type="EMDB" id="EMD-36897"/>
<dbReference type="EMDB" id="EMD-36898"/>
<dbReference type="EMDB" id="EMD-36899"/>
<dbReference type="EMDB" id="EMD-3696"/>
<dbReference type="EMDB" id="EMD-39001"/>
<dbReference type="EMDB" id="EMD-40862"/>
<dbReference type="EMDB" id="EMD-40863"/>
<dbReference type="EMDB" id="EMD-40864"/>
<dbReference type="EMDB" id="EMD-41433"/>
<dbReference type="EMDB" id="EMD-41437"/>
<dbReference type="EMDB" id="EMD-41439"/>
<dbReference type="EMDB" id="EMD-41448"/>
<dbReference type="EMDB" id="EMD-41456"/>
<dbReference type="EMDB" id="EMD-41695"/>
<dbReference type="EMDB" id="EMD-41856"/>
<dbReference type="EMDB" id="EMD-42453"/>
<dbReference type="EMDB" id="EMD-42454"/>
<dbReference type="EMDB" id="EMD-42473"/>
<dbReference type="EMDB" id="EMD-42474"/>
<dbReference type="EMDB" id="EMD-42477"/>
<dbReference type="EMDB" id="EMD-42479"/>
<dbReference type="EMDB" id="EMD-42492"/>
<dbReference type="EMDB" id="EMD-42493"/>
<dbReference type="EMDB" id="EMD-42503"/>
<dbReference type="EMDB" id="EMD-42504"/>
<dbReference type="EMDB" id="EMD-4274"/>
<dbReference type="EMDB" id="EMD-4275"/>
<dbReference type="EMDB" id="EMD-4397"/>
<dbReference type="EMDB" id="EMD-4769"/>
<dbReference type="EMDB" id="EMD-4770"/>
<dbReference type="EMDB" id="EMD-4882"/>
<dbReference type="EMDB" id="EMD-4885"/>
<dbReference type="EMDB" id="EMD-4886"/>
<dbReference type="EMDB" id="EMD-4892"/>
<dbReference type="EMDB" id="EMD-4893"/>
<dbReference type="EMDB" id="EMD-51617"/>
<dbReference type="EMDB" id="EMD-51622"/>
<dbReference type="EMDB" id="EMD-51623"/>
<dbReference type="EMDB" id="EMD-52919"/>
<dbReference type="EMDB" id="EMD-7002"/>
<dbReference type="EMDB" id="EMD-7103"/>
<dbReference type="EMDB" id="EMD-7349"/>
<dbReference type="EMDB" id="EMD-7350"/>
<dbReference type="EMDB" id="EMD-7351"/>
<dbReference type="EMDB" id="EMD-7438"/>
<dbReference type="EMDB" id="EMD-7439"/>
<dbReference type="EMDB" id="EMD-8584"/>
<dbReference type="EMDB" id="EMD-8586"/>
<dbReference type="EMDB" id="EMD-8732"/>
<dbReference type="EMDB" id="EMD-9792"/>
<dbReference type="EMDB" id="EMD-9852"/>
<dbReference type="EMDB" id="EMD-9916"/>
<dbReference type="SMR" id="P0A8V2"/>
<dbReference type="BioGRID" id="4263472">
    <property type="interactions" value="94"/>
</dbReference>
<dbReference type="BioGRID" id="852782">
    <property type="interactions" value="5"/>
</dbReference>
<dbReference type="ComplexPortal" id="CPX-4881">
    <property type="entry name" value="DNA-directed RNA polymerase holoenzyme complex, Sigma70 variant"/>
</dbReference>
<dbReference type="ComplexPortal" id="CPX-4883">
    <property type="entry name" value="DNA-directed RNA polymerase holoenzyme complex, SigmaS variant"/>
</dbReference>
<dbReference type="ComplexPortal" id="CPX-4884">
    <property type="entry name" value="DNA-directed RNA polymerase holoenzyme complex, Sigma54 variant"/>
</dbReference>
<dbReference type="ComplexPortal" id="CPX-4885">
    <property type="entry name" value="DNA-directed RNA polymerase holoenzyme complex, SigmaE variant"/>
</dbReference>
<dbReference type="ComplexPortal" id="CPX-4886">
    <property type="entry name" value="DNA-directed RNA polymerase holoenzyme complex, SigmaF variant"/>
</dbReference>
<dbReference type="ComplexPortal" id="CPX-4887">
    <property type="entry name" value="DNA-directed RNA polymerase holoenzyme complex, SigmaH variant"/>
</dbReference>
<dbReference type="ComplexPortal" id="CPX-4888">
    <property type="entry name" value="DNA-directed RNA polymerase holoenzyme complex, Sigma fecI variant"/>
</dbReference>
<dbReference type="ComplexPortal" id="CPX-5674">
    <property type="entry name" value="Transcription elongation complex"/>
</dbReference>
<dbReference type="ComplexPortal" id="CPX-5780">
    <property type="entry name" value="lambdaN-dependent processive transcription antitermination complex"/>
</dbReference>
<dbReference type="DIP" id="DIP-35777N"/>
<dbReference type="FunCoup" id="P0A8V2">
    <property type="interactions" value="986"/>
</dbReference>
<dbReference type="IntAct" id="P0A8V2">
    <property type="interactions" value="103"/>
</dbReference>
<dbReference type="STRING" id="511145.b3987"/>
<dbReference type="BindingDB" id="P0A8V2"/>
<dbReference type="ChEMBL" id="CHEMBL1852"/>
<dbReference type="DrugBank" id="DB00615">
    <property type="generic name" value="Rifabutin"/>
</dbReference>
<dbReference type="DrugBank" id="DB04934">
    <property type="generic name" value="Rifalazil"/>
</dbReference>
<dbReference type="DrugBank" id="DB11753">
    <property type="generic name" value="Rifamycin"/>
</dbReference>
<dbReference type="DrugBank" id="DB01220">
    <property type="generic name" value="Rifaximin"/>
</dbReference>
<dbReference type="DrugCentral" id="P0A8V2"/>
<dbReference type="CarbonylDB" id="P0A8V2"/>
<dbReference type="iPTMnet" id="P0A8V2"/>
<dbReference type="jPOST" id="P0A8V2"/>
<dbReference type="PaxDb" id="511145-b3987"/>
<dbReference type="EnsemblBacteria" id="AAC76961">
    <property type="protein sequence ID" value="AAC76961"/>
    <property type="gene ID" value="b3987"/>
</dbReference>
<dbReference type="GeneID" id="93777907"/>
<dbReference type="GeneID" id="948488"/>
<dbReference type="KEGG" id="ecj:JW3950"/>
<dbReference type="KEGG" id="eco:b3987"/>
<dbReference type="KEGG" id="ecoc:C3026_21535"/>
<dbReference type="PATRIC" id="fig|1411691.4.peg.2725"/>
<dbReference type="EchoBASE" id="EB0887"/>
<dbReference type="eggNOG" id="COG0085">
    <property type="taxonomic scope" value="Bacteria"/>
</dbReference>
<dbReference type="HOGENOM" id="CLU_000524_4_3_6"/>
<dbReference type="InParanoid" id="P0A8V2"/>
<dbReference type="OMA" id="FMTWEGY"/>
<dbReference type="OrthoDB" id="9803954at2"/>
<dbReference type="PhylomeDB" id="P0A8V2"/>
<dbReference type="BioCyc" id="EcoCyc:RPOB-MONOMER"/>
<dbReference type="BioCyc" id="MetaCyc:RPOB-MONOMER"/>
<dbReference type="BRENDA" id="2.7.7.6">
    <property type="organism ID" value="2026"/>
</dbReference>
<dbReference type="EvolutionaryTrace" id="P0A8V2"/>
<dbReference type="PRO" id="PR:P0A8V2"/>
<dbReference type="Proteomes" id="UP000000625">
    <property type="component" value="Chromosome"/>
</dbReference>
<dbReference type="GO" id="GO:0005737">
    <property type="term" value="C:cytoplasm"/>
    <property type="evidence" value="ECO:0007005"/>
    <property type="project" value="UniProtKB"/>
</dbReference>
<dbReference type="GO" id="GO:0005829">
    <property type="term" value="C:cytosol"/>
    <property type="evidence" value="ECO:0000314"/>
    <property type="project" value="EcoCyc"/>
</dbReference>
<dbReference type="GO" id="GO:0000345">
    <property type="term" value="C:cytosolic DNA-directed RNA polymerase complex"/>
    <property type="evidence" value="ECO:0000353"/>
    <property type="project" value="ComplexPortal"/>
</dbReference>
<dbReference type="GO" id="GO:0016020">
    <property type="term" value="C:membrane"/>
    <property type="evidence" value="ECO:0007005"/>
    <property type="project" value="UniProtKB"/>
</dbReference>
<dbReference type="GO" id="GO:0008023">
    <property type="term" value="C:transcription elongation factor complex"/>
    <property type="evidence" value="ECO:0000303"/>
    <property type="project" value="ComplexPortal"/>
</dbReference>
<dbReference type="GO" id="GO:0003677">
    <property type="term" value="F:DNA binding"/>
    <property type="evidence" value="ECO:0007669"/>
    <property type="project" value="UniProtKB-UniRule"/>
</dbReference>
<dbReference type="GO" id="GO:0003899">
    <property type="term" value="F:DNA-directed RNA polymerase activity"/>
    <property type="evidence" value="ECO:0007669"/>
    <property type="project" value="UniProtKB-UniRule"/>
</dbReference>
<dbReference type="GO" id="GO:0032549">
    <property type="term" value="F:ribonucleoside binding"/>
    <property type="evidence" value="ECO:0007669"/>
    <property type="project" value="InterPro"/>
</dbReference>
<dbReference type="GO" id="GO:0044780">
    <property type="term" value="P:bacterial-type flagellum assembly"/>
    <property type="evidence" value="ECO:0000303"/>
    <property type="project" value="ComplexPortal"/>
</dbReference>
<dbReference type="GO" id="GO:0071973">
    <property type="term" value="P:bacterial-type flagellum-dependent cell motility"/>
    <property type="evidence" value="ECO:0000303"/>
    <property type="project" value="ComplexPortal"/>
</dbReference>
<dbReference type="GO" id="GO:0048870">
    <property type="term" value="P:cell motility"/>
    <property type="evidence" value="ECO:0000303"/>
    <property type="project" value="ComplexPortal"/>
</dbReference>
<dbReference type="GO" id="GO:0036460">
    <property type="term" value="P:cellular response to cell envelope stress"/>
    <property type="evidence" value="ECO:0000303"/>
    <property type="project" value="ComplexPortal"/>
</dbReference>
<dbReference type="GO" id="GO:0006352">
    <property type="term" value="P:DNA-templated transcription initiation"/>
    <property type="evidence" value="ECO:0000314"/>
    <property type="project" value="ComplexPortal"/>
</dbReference>
<dbReference type="GO" id="GO:0006879">
    <property type="term" value="P:intracellular iron ion homeostasis"/>
    <property type="evidence" value="ECO:0000303"/>
    <property type="project" value="ComplexPortal"/>
</dbReference>
<dbReference type="GO" id="GO:0042128">
    <property type="term" value="P:nitrate assimilation"/>
    <property type="evidence" value="ECO:0000303"/>
    <property type="project" value="ComplexPortal"/>
</dbReference>
<dbReference type="GO" id="GO:0032784">
    <property type="term" value="P:regulation of DNA-templated transcription elongation"/>
    <property type="evidence" value="ECO:0000303"/>
    <property type="project" value="ComplexPortal"/>
</dbReference>
<dbReference type="GO" id="GO:2000142">
    <property type="term" value="P:regulation of DNA-templated transcription initiation"/>
    <property type="evidence" value="ECO:0000314"/>
    <property type="project" value="ComplexPortal"/>
</dbReference>
<dbReference type="GO" id="GO:0046677">
    <property type="term" value="P:response to antibiotic"/>
    <property type="evidence" value="ECO:0007669"/>
    <property type="project" value="UniProtKB-KW"/>
</dbReference>
<dbReference type="GO" id="GO:0009408">
    <property type="term" value="P:response to heat"/>
    <property type="evidence" value="ECO:0000303"/>
    <property type="project" value="ComplexPortal"/>
</dbReference>
<dbReference type="GO" id="GO:0090605">
    <property type="term" value="P:submerged biofilm formation"/>
    <property type="evidence" value="ECO:0000303"/>
    <property type="project" value="ComplexPortal"/>
</dbReference>
<dbReference type="GO" id="GO:0031564">
    <property type="term" value="P:transcription antitermination"/>
    <property type="evidence" value="ECO:0000314"/>
    <property type="project" value="ComplexPortal"/>
</dbReference>
<dbReference type="CDD" id="cd00653">
    <property type="entry name" value="RNA_pol_B_RPB2"/>
    <property type="match status" value="1"/>
</dbReference>
<dbReference type="FunFam" id="2.30.150.10:FF:000001">
    <property type="entry name" value="DNA-directed RNA polymerase subunit beta"/>
    <property type="match status" value="1"/>
</dbReference>
<dbReference type="FunFam" id="2.40.270.10:FF:000003">
    <property type="entry name" value="DNA-directed RNA polymerase subunit beta"/>
    <property type="match status" value="1"/>
</dbReference>
<dbReference type="FunFam" id="2.40.270.10:FF:000004">
    <property type="entry name" value="DNA-directed RNA polymerase subunit beta"/>
    <property type="match status" value="1"/>
</dbReference>
<dbReference type="FunFam" id="2.40.50.100:FF:000006">
    <property type="entry name" value="DNA-directed RNA polymerase subunit beta"/>
    <property type="match status" value="1"/>
</dbReference>
<dbReference type="FunFam" id="2.40.50.150:FF:000001">
    <property type="entry name" value="DNA-directed RNA polymerase subunit beta"/>
    <property type="match status" value="1"/>
</dbReference>
<dbReference type="FunFam" id="3.90.1100.10:FF:000002">
    <property type="entry name" value="DNA-directed RNA polymerase subunit beta"/>
    <property type="match status" value="1"/>
</dbReference>
<dbReference type="FunFam" id="3.90.1110.10:FF:000001">
    <property type="entry name" value="DNA-directed RNA polymerase subunit beta"/>
    <property type="match status" value="1"/>
</dbReference>
<dbReference type="FunFam" id="3.90.1110.10:FF:000004">
    <property type="entry name" value="DNA-directed RNA polymerase subunit beta"/>
    <property type="match status" value="1"/>
</dbReference>
<dbReference type="FunFam" id="3.90.1800.10:FF:000001">
    <property type="entry name" value="DNA-directed RNA polymerase subunit beta"/>
    <property type="match status" value="1"/>
</dbReference>
<dbReference type="Gene3D" id="2.40.50.100">
    <property type="match status" value="1"/>
</dbReference>
<dbReference type="Gene3D" id="2.40.50.150">
    <property type="match status" value="1"/>
</dbReference>
<dbReference type="Gene3D" id="3.90.1100.10">
    <property type="match status" value="2"/>
</dbReference>
<dbReference type="Gene3D" id="6.10.140.1670">
    <property type="match status" value="1"/>
</dbReference>
<dbReference type="Gene3D" id="2.30.150.10">
    <property type="entry name" value="DNA-directed RNA polymerase, beta subunit, external 1 domain"/>
    <property type="match status" value="1"/>
</dbReference>
<dbReference type="Gene3D" id="2.40.270.10">
    <property type="entry name" value="DNA-directed RNA polymerase, subunit 2, domain 6"/>
    <property type="match status" value="1"/>
</dbReference>
<dbReference type="Gene3D" id="3.90.1800.10">
    <property type="entry name" value="RNA polymerase alpha subunit dimerisation domain"/>
    <property type="match status" value="1"/>
</dbReference>
<dbReference type="Gene3D" id="3.90.1110.10">
    <property type="entry name" value="RNA polymerase Rpb2, domain 2"/>
    <property type="match status" value="1"/>
</dbReference>
<dbReference type="HAMAP" id="MF_01321">
    <property type="entry name" value="RNApol_bact_RpoB"/>
    <property type="match status" value="1"/>
</dbReference>
<dbReference type="InterPro" id="IPR042107">
    <property type="entry name" value="DNA-dir_RNA_pol_bsu_ext_1_sf"/>
</dbReference>
<dbReference type="InterPro" id="IPR019462">
    <property type="entry name" value="DNA-dir_RNA_pol_bsu_external_1"/>
</dbReference>
<dbReference type="InterPro" id="IPR015712">
    <property type="entry name" value="DNA-dir_RNA_pol_su2"/>
</dbReference>
<dbReference type="InterPro" id="IPR007120">
    <property type="entry name" value="DNA-dir_RNAP_su2_dom"/>
</dbReference>
<dbReference type="InterPro" id="IPR037033">
    <property type="entry name" value="DNA-dir_RNAP_su2_hyb_sf"/>
</dbReference>
<dbReference type="InterPro" id="IPR010243">
    <property type="entry name" value="RNA_pol_bsu_bac"/>
</dbReference>
<dbReference type="InterPro" id="IPR007121">
    <property type="entry name" value="RNA_pol_bsu_CS"/>
</dbReference>
<dbReference type="InterPro" id="IPR007644">
    <property type="entry name" value="RNA_pol_bsu_protrusion"/>
</dbReference>
<dbReference type="InterPro" id="IPR007642">
    <property type="entry name" value="RNA_pol_Rpb2_2"/>
</dbReference>
<dbReference type="InterPro" id="IPR037034">
    <property type="entry name" value="RNA_pol_Rpb2_2_sf"/>
</dbReference>
<dbReference type="InterPro" id="IPR007645">
    <property type="entry name" value="RNA_pol_Rpb2_3"/>
</dbReference>
<dbReference type="InterPro" id="IPR007641">
    <property type="entry name" value="RNA_pol_Rpb2_7"/>
</dbReference>
<dbReference type="InterPro" id="IPR014724">
    <property type="entry name" value="RNA_pol_RPB2_OB-fold"/>
</dbReference>
<dbReference type="NCBIfam" id="NF001616">
    <property type="entry name" value="PRK00405.1"/>
    <property type="match status" value="1"/>
</dbReference>
<dbReference type="NCBIfam" id="TIGR02013">
    <property type="entry name" value="rpoB"/>
    <property type="match status" value="1"/>
</dbReference>
<dbReference type="PANTHER" id="PTHR20856">
    <property type="entry name" value="DNA-DIRECTED RNA POLYMERASE I SUBUNIT 2"/>
    <property type="match status" value="1"/>
</dbReference>
<dbReference type="Pfam" id="PF04563">
    <property type="entry name" value="RNA_pol_Rpb2_1"/>
    <property type="match status" value="1"/>
</dbReference>
<dbReference type="Pfam" id="PF04561">
    <property type="entry name" value="RNA_pol_Rpb2_2"/>
    <property type="match status" value="2"/>
</dbReference>
<dbReference type="Pfam" id="PF04565">
    <property type="entry name" value="RNA_pol_Rpb2_3"/>
    <property type="match status" value="1"/>
</dbReference>
<dbReference type="Pfam" id="PF10385">
    <property type="entry name" value="RNA_pol_Rpb2_45"/>
    <property type="match status" value="1"/>
</dbReference>
<dbReference type="Pfam" id="PF00562">
    <property type="entry name" value="RNA_pol_Rpb2_6"/>
    <property type="match status" value="1"/>
</dbReference>
<dbReference type="Pfam" id="PF04560">
    <property type="entry name" value="RNA_pol_Rpb2_7"/>
    <property type="match status" value="1"/>
</dbReference>
<dbReference type="SUPFAM" id="SSF64484">
    <property type="entry name" value="beta and beta-prime subunits of DNA dependent RNA-polymerase"/>
    <property type="match status" value="1"/>
</dbReference>
<dbReference type="PROSITE" id="PS01166">
    <property type="entry name" value="RNA_POL_BETA"/>
    <property type="match status" value="1"/>
</dbReference>
<gene>
    <name type="primary">rpoB</name>
    <name type="synonym">groN</name>
    <name type="synonym">nitB</name>
    <name type="synonym">rif</name>
    <name type="synonym">ron</name>
    <name type="synonym">stl</name>
    <name type="synonym">stv</name>
    <name type="synonym">tabD</name>
    <name type="ordered locus">b3987</name>
    <name type="ordered locus">JW3950</name>
</gene>
<sequence>MVYSYTEKKRIRKDFGKRPQVLDVPYLLSIQLDSFQKFIEQDPEGQYGLEAAFRSVFPIQSYSGNSELQYVSYRLGEPVFDVQECQIRGVTYSAPLRVKLRLVIYEREAPEGTVKDIKEQEVYMGEIPLMTDNGTFVINGTERVIVSQLHRSPGVFFDSDKGKTHSSGKVLYNARIIPYRGSWLDFEFDPKDNLFVRIDRRRKLPATIILRALNYTTEQILDLFFEKVIFEIRDNKLQMELVPERLRGETASFDIEANGKVYVEKGRRITARHIRQLEKDDVKLIEVPVEYIAGKVVAKDYIDESTGELICAANMELSLDLLAKLSQSGHKRIETLFTNDLDHGPYISETLRVDPTNDRLSALVEIYRMMRPGEPPTREAAESLFENLFFSEDRYDLSAVGRMKFNRSLLREEIEGSGILSKDDIIDVMKKLIDIRNGKGEVDDIDHLGNRRIRSVGEMAENQFRVGLVRVERAVKERLSLGDLDTLMPQDMINAKPISAAVKEFFGSSQLSQFMDQNNPLSEITHKRRISALGPGGLTRERAGFEVRDVHPTHYGRVCPIETPEGPNIGLINSLSVYAQTNEYGFLETPYRKVTDGVVTDEIHYLSAIEEGNYVIAQANSNLDEEGHFVEDLVTCRSKGESSLFSRDQVDYMDVSTQQVVSVGASLIPFLEHDDANRALMGANMQRQAVPTLRADKPLVGTGMERAVAVDSGVTAVAKRGGVVQYVDASRIVIKVNEDEMYPGEAGIDIYNLTKYTRSNQNTCINQMPCVSLGEPVERGDVLADGPSTDLGELALGQNMRVAFMPWNGYNFEDSILVSERVVQEDRFTTIHIQELACVSRDTKLGPEEITADIPNVGEAALSKLDESGIVYIGAEVTGGDILVGKVTPKGETQLTPEEKLLRAIFGEKASDVKDSSLRVPNGVSGTVIDVQVFTRDGVEKDKRALEIEEMQLKQAKKDLSEELQILEAGLFSRIRAVLVAGGVEAEKLDKLPRDRWLELGLTDEEKQNQLEQLAEQYDELKHEFEKKLEAKRRKITQGDDLAPGVLKIVKVYLAVKRRIQPGDKMAGRHGNKGVISKINPIEDMPYDENGTPVDIVLNPLGVPSRMNIGQILETHLGMAAKGIGDKINAMLKQQQEVAKLREFIQRAYDLGADVRQKVDLSTFSDEEVMRLAENLRKGMPIATPVFDGAKEAEIKELLKLGDLPTSGQIRLYDGRTGEQFERPVTVGYMYMLKLNHLVDDKMHARSTGSYSLVTQQPLGGKAQFGGQRFGEMEVWALEAYGAAYTLQEMLTVKSDDVNGRTKMYKNIVDGNHQMEPGMPESFNVLLKEIRSLGINIELEDE</sequence>
<keyword id="KW-0002">3D-structure</keyword>
<keyword id="KW-0007">Acetylation</keyword>
<keyword id="KW-0046">Antibiotic resistance</keyword>
<keyword id="KW-0903">Direct protein sequencing</keyword>
<keyword id="KW-0240">DNA-directed RNA polymerase</keyword>
<keyword id="KW-0548">Nucleotidyltransferase</keyword>
<keyword id="KW-1185">Reference proteome</keyword>
<keyword id="KW-0804">Transcription</keyword>
<keyword id="KW-0808">Transferase</keyword>
<feature type="chain" id="PRO_0000047892" description="DNA-directed RNA polymerase subunit beta">
    <location>
        <begin position="1"/>
        <end position="1342"/>
    </location>
</feature>
<feature type="modified residue" description="N6-acetyllysine" evidence="2">
    <location>
        <position position="1022"/>
    </location>
</feature>
<feature type="modified residue" description="N6-acetyllysine" evidence="2">
    <location>
        <position position="1200"/>
    </location>
</feature>
<feature type="mutagenesis site" description="Resistant to antibiotics salinamide A and B." evidence="8">
    <original>I</original>
    <variation>S</variation>
    <location>
        <position position="561"/>
    </location>
</feature>
<feature type="mutagenesis site" description="Resistant to antibiotics salinamide A and B." evidence="8">
    <original>I</original>
    <variation>S</variation>
    <location>
        <position position="569"/>
    </location>
</feature>
<feature type="mutagenesis site" description="Resistant to antibiotics salinamide A and B." evidence="8">
    <original>A</original>
    <variation>E</variation>
    <location>
        <position position="665"/>
    </location>
</feature>
<feature type="mutagenesis site" description="Resistant to antibiotics salinamide A and B." evidence="8">
    <original>D</original>
    <variation>A</variation>
    <variation>G</variation>
    <location>
        <position position="675"/>
    </location>
</feature>
<feature type="mutagenesis site" description="Resistant to antibiotics salinamide A and B." evidence="8">
    <original>N</original>
    <variation>H</variation>
    <variation>K</variation>
    <location>
        <position position="677"/>
    </location>
</feature>
<feature type="mutagenesis site" description="Resistant to antibiotics salinamide A and B." evidence="8">
    <original>L</original>
    <variation>M</variation>
    <location>
        <position position="680"/>
    </location>
</feature>
<feature type="mutagenesis site" description="Disrupts the enzyme's active center." evidence="5">
    <original>E</original>
    <variation>K</variation>
    <location>
        <position position="813"/>
    </location>
</feature>
<feature type="sequence conflict" description="In Ref. 10; AA sequence." evidence="12" ref="10">
    <original>S</original>
    <variation>R</variation>
    <location>
        <position position="4"/>
    </location>
</feature>
<feature type="sequence conflict" description="In Ref. 6; CAA23629." evidence="12" ref="6">
    <original>ER</original>
    <variation>G</variation>
    <location>
        <begin position="106"/>
        <end position="107"/>
    </location>
</feature>
<feature type="sequence conflict" description="In Ref. 6; CAA23629." evidence="12" ref="6">
    <original>LFENLFFS</original>
    <variation>CSRTCSSPT</variation>
    <location>
        <begin position="384"/>
        <end position="391"/>
    </location>
</feature>
<feature type="sequence conflict" description="In Ref. 1; CAA23625/CAA23627 and 11; AAA24585." evidence="12" ref="1 11">
    <original>D</original>
    <variation>V</variation>
    <location>
        <position position="516"/>
    </location>
</feature>
<feature type="turn" evidence="37">
    <location>
        <begin position="5"/>
        <end position="8"/>
    </location>
</feature>
<feature type="helix" evidence="37">
    <location>
        <begin position="29"/>
        <end position="39"/>
    </location>
</feature>
<feature type="strand" evidence="25">
    <location>
        <begin position="43"/>
        <end position="47"/>
    </location>
</feature>
<feature type="helix" evidence="37">
    <location>
        <begin position="48"/>
        <end position="54"/>
    </location>
</feature>
<feature type="strand" evidence="37">
    <location>
        <begin position="58"/>
        <end position="60"/>
    </location>
</feature>
<feature type="strand" evidence="37">
    <location>
        <begin position="62"/>
        <end position="75"/>
    </location>
</feature>
<feature type="helix" evidence="37">
    <location>
        <begin position="82"/>
        <end position="88"/>
    </location>
</feature>
<feature type="strand" evidence="37">
    <location>
        <begin position="93"/>
        <end position="105"/>
    </location>
</feature>
<feature type="strand" evidence="45">
    <location>
        <begin position="106"/>
        <end position="109"/>
    </location>
</feature>
<feature type="strand" evidence="37">
    <location>
        <begin position="110"/>
        <end position="112"/>
    </location>
</feature>
<feature type="strand" evidence="37">
    <location>
        <begin position="114"/>
        <end position="128"/>
    </location>
</feature>
<feature type="strand" evidence="40">
    <location>
        <begin position="132"/>
        <end position="134"/>
    </location>
</feature>
<feature type="strand" evidence="37">
    <location>
        <begin position="136"/>
        <end position="138"/>
    </location>
</feature>
<feature type="strand" evidence="37">
    <location>
        <begin position="141"/>
        <end position="145"/>
    </location>
</feature>
<feature type="strand" evidence="37">
    <location>
        <begin position="147"/>
        <end position="151"/>
    </location>
</feature>
<feature type="strand" evidence="20">
    <location>
        <begin position="154"/>
        <end position="159"/>
    </location>
</feature>
<feature type="strand" evidence="37">
    <location>
        <begin position="162"/>
        <end position="165"/>
    </location>
</feature>
<feature type="turn" evidence="37">
    <location>
        <begin position="166"/>
        <end position="168"/>
    </location>
</feature>
<feature type="strand" evidence="20">
    <location>
        <begin position="172"/>
        <end position="177"/>
    </location>
</feature>
<feature type="strand" evidence="20">
    <location>
        <begin position="179"/>
        <end position="181"/>
    </location>
</feature>
<feature type="strand" evidence="20">
    <location>
        <begin position="184"/>
        <end position="188"/>
    </location>
</feature>
<feature type="strand" evidence="38">
    <location>
        <begin position="190"/>
        <end position="192"/>
    </location>
</feature>
<feature type="strand" evidence="20">
    <location>
        <begin position="194"/>
        <end position="198"/>
    </location>
</feature>
<feature type="strand" evidence="31">
    <location>
        <begin position="199"/>
        <end position="201"/>
    </location>
</feature>
<feature type="strand" evidence="43">
    <location>
        <begin position="204"/>
        <end position="206"/>
    </location>
</feature>
<feature type="helix" evidence="20">
    <location>
        <begin position="207"/>
        <end position="212"/>
    </location>
</feature>
<feature type="helix" evidence="20">
    <location>
        <begin position="217"/>
        <end position="224"/>
    </location>
</feature>
<feature type="strand" evidence="20">
    <location>
        <begin position="227"/>
        <end position="233"/>
    </location>
</feature>
<feature type="strand" evidence="20">
    <location>
        <begin position="236"/>
        <end position="240"/>
    </location>
</feature>
<feature type="helix" evidence="20">
    <location>
        <begin position="243"/>
        <end position="246"/>
    </location>
</feature>
<feature type="strand" evidence="47">
    <location>
        <begin position="247"/>
        <end position="249"/>
    </location>
</feature>
<feature type="strand" evidence="29">
    <location>
        <begin position="250"/>
        <end position="253"/>
    </location>
</feature>
<feature type="strand" evidence="20">
    <location>
        <begin position="255"/>
        <end position="257"/>
    </location>
</feature>
<feature type="strand" evidence="20">
    <location>
        <begin position="260"/>
        <end position="263"/>
    </location>
</feature>
<feature type="strand" evidence="27">
    <location>
        <begin position="265"/>
        <end position="268"/>
    </location>
</feature>
<feature type="helix" evidence="20">
    <location>
        <begin position="271"/>
        <end position="279"/>
    </location>
</feature>
<feature type="turn" evidence="47">
    <location>
        <begin position="281"/>
        <end position="283"/>
    </location>
</feature>
<feature type="strand" evidence="20">
    <location>
        <begin position="284"/>
        <end position="286"/>
    </location>
</feature>
<feature type="helix" evidence="20">
    <location>
        <begin position="289"/>
        <end position="293"/>
    </location>
</feature>
<feature type="strand" evidence="42">
    <location>
        <begin position="295"/>
        <end position="297"/>
    </location>
</feature>
<feature type="strand" evidence="42">
    <location>
        <begin position="301"/>
        <end position="303"/>
    </location>
</feature>
<feature type="turn" evidence="20">
    <location>
        <begin position="304"/>
        <end position="306"/>
    </location>
</feature>
<feature type="strand" evidence="20">
    <location>
        <begin position="309"/>
        <end position="311"/>
    </location>
</feature>
<feature type="strand" evidence="37">
    <location>
        <begin position="313"/>
        <end position="316"/>
    </location>
</feature>
<feature type="helix" evidence="20">
    <location>
        <begin position="319"/>
        <end position="323"/>
    </location>
</feature>
<feature type="turn" evidence="20">
    <location>
        <begin position="326"/>
        <end position="329"/>
    </location>
</feature>
<feature type="strand" evidence="20">
    <location>
        <begin position="332"/>
        <end position="336"/>
    </location>
</feature>
<feature type="strand" evidence="20">
    <location>
        <begin position="340"/>
        <end position="343"/>
    </location>
</feature>
<feature type="helix" evidence="20">
    <location>
        <begin position="346"/>
        <end position="353"/>
    </location>
</feature>
<feature type="helix" evidence="20">
    <location>
        <begin position="359"/>
        <end position="370"/>
    </location>
</feature>
<feature type="strand" evidence="32">
    <location>
        <begin position="371"/>
        <end position="374"/>
    </location>
</feature>
<feature type="helix" evidence="20">
    <location>
        <begin position="378"/>
        <end position="389"/>
    </location>
</feature>
<feature type="turn" evidence="20">
    <location>
        <begin position="392"/>
        <end position="394"/>
    </location>
</feature>
<feature type="helix" evidence="20">
    <location>
        <begin position="398"/>
        <end position="403"/>
    </location>
</feature>
<feature type="turn" evidence="20">
    <location>
        <begin position="406"/>
        <end position="410"/>
    </location>
</feature>
<feature type="helix" evidence="20">
    <location>
        <begin position="424"/>
        <end position="429"/>
    </location>
</feature>
<feature type="helix" evidence="20">
    <location>
        <begin position="433"/>
        <end position="437"/>
    </location>
</feature>
<feature type="strand" evidence="24">
    <location>
        <begin position="438"/>
        <end position="440"/>
    </location>
</feature>
<feature type="strand" evidence="26">
    <location>
        <begin position="445"/>
        <end position="447"/>
    </location>
</feature>
<feature type="turn" evidence="37">
    <location>
        <begin position="448"/>
        <end position="450"/>
    </location>
</feature>
<feature type="strand" evidence="37">
    <location>
        <begin position="451"/>
        <end position="454"/>
    </location>
</feature>
<feature type="helix" evidence="37">
    <location>
        <begin position="456"/>
        <end position="481"/>
    </location>
</feature>
<feature type="turn" evidence="25">
    <location>
        <begin position="484"/>
        <end position="486"/>
    </location>
</feature>
<feature type="helix" evidence="37">
    <location>
        <begin position="489"/>
        <end position="492"/>
    </location>
</feature>
<feature type="helix" evidence="37">
    <location>
        <begin position="496"/>
        <end position="508"/>
    </location>
</feature>
<feature type="strand" evidence="37">
    <location>
        <begin position="512"/>
        <end position="514"/>
    </location>
</feature>
<feature type="helix" evidence="37">
    <location>
        <begin position="520"/>
        <end position="528"/>
    </location>
</feature>
<feature type="strand" evidence="37">
    <location>
        <begin position="529"/>
        <end position="532"/>
    </location>
</feature>
<feature type="strand" evidence="23">
    <location>
        <begin position="534"/>
        <end position="537"/>
    </location>
</feature>
<feature type="turn" evidence="37">
    <location>
        <begin position="540"/>
        <end position="542"/>
    </location>
</feature>
<feature type="helix" evidence="37">
    <location>
        <begin position="545"/>
        <end position="548"/>
    </location>
</feature>
<feature type="helix" evidence="37">
    <location>
        <begin position="552"/>
        <end position="554"/>
    </location>
</feature>
<feature type="turn" evidence="37">
    <location>
        <begin position="555"/>
        <end position="557"/>
    </location>
</feature>
<feature type="turn" evidence="37">
    <location>
        <begin position="567"/>
        <end position="571"/>
    </location>
</feature>
<feature type="strand" evidence="37">
    <location>
        <begin position="572"/>
        <end position="575"/>
    </location>
</feature>
<feature type="strand" evidence="25">
    <location>
        <begin position="583"/>
        <end position="585"/>
    </location>
</feature>
<feature type="strand" evidence="37">
    <location>
        <begin position="587"/>
        <end position="595"/>
    </location>
</feature>
<feature type="strand" evidence="37">
    <location>
        <begin position="598"/>
        <end position="607"/>
    </location>
</feature>
<feature type="helix" evidence="37">
    <location>
        <begin position="608"/>
        <end position="611"/>
    </location>
</feature>
<feature type="strand" evidence="27">
    <location>
        <begin position="612"/>
        <end position="614"/>
    </location>
</feature>
<feature type="strand" evidence="22">
    <location>
        <begin position="619"/>
        <end position="622"/>
    </location>
</feature>
<feature type="strand" evidence="37">
    <location>
        <begin position="627"/>
        <end position="640"/>
    </location>
</feature>
<feature type="strand" evidence="37">
    <location>
        <begin position="642"/>
        <end position="645"/>
    </location>
</feature>
<feature type="turn" evidence="37">
    <location>
        <begin position="647"/>
        <end position="649"/>
    </location>
</feature>
<feature type="strand" evidence="37">
    <location>
        <begin position="652"/>
        <end position="655"/>
    </location>
</feature>
<feature type="strand" evidence="37">
    <location>
        <begin position="659"/>
        <end position="661"/>
    </location>
</feature>
<feature type="helix" evidence="37">
    <location>
        <begin position="663"/>
        <end position="666"/>
    </location>
</feature>
<feature type="strand" evidence="39">
    <location>
        <begin position="668"/>
        <end position="670"/>
    </location>
</feature>
<feature type="helix" evidence="37">
    <location>
        <begin position="671"/>
        <end position="673"/>
    </location>
</feature>
<feature type="helix" evidence="37">
    <location>
        <begin position="676"/>
        <end position="686"/>
    </location>
</feature>
<feature type="strand" evidence="33">
    <location>
        <begin position="687"/>
        <end position="689"/>
    </location>
</feature>
<feature type="strand" evidence="28">
    <location>
        <begin position="692"/>
        <end position="694"/>
    </location>
</feature>
<feature type="strand" evidence="37">
    <location>
        <begin position="699"/>
        <end position="701"/>
    </location>
</feature>
<feature type="helix" evidence="37">
    <location>
        <begin position="705"/>
        <end position="712"/>
    </location>
</feature>
<feature type="strand" evidence="37">
    <location>
        <begin position="715"/>
        <end position="717"/>
    </location>
</feature>
<feature type="strand" evidence="37">
    <location>
        <begin position="722"/>
        <end position="728"/>
    </location>
</feature>
<feature type="strand" evidence="37">
    <location>
        <begin position="731"/>
        <end position="736"/>
    </location>
</feature>
<feature type="helix" evidence="37">
    <location>
        <begin position="738"/>
        <end position="740"/>
    </location>
</feature>
<feature type="strand" evidence="25">
    <location>
        <begin position="743"/>
        <end position="745"/>
    </location>
</feature>
<feature type="strand" evidence="37">
    <location>
        <begin position="748"/>
        <end position="752"/>
    </location>
</feature>
<feature type="strand" evidence="37">
    <location>
        <begin position="756"/>
        <end position="758"/>
    </location>
</feature>
<feature type="strand" evidence="37">
    <location>
        <begin position="762"/>
        <end position="765"/>
    </location>
</feature>
<feature type="strand" evidence="30">
    <location>
        <begin position="768"/>
        <end position="770"/>
    </location>
</feature>
<feature type="strand" evidence="37">
    <location>
        <begin position="782"/>
        <end position="785"/>
    </location>
</feature>
<feature type="strand" evidence="26">
    <location>
        <begin position="789"/>
        <end position="794"/>
    </location>
</feature>
<feature type="strand" evidence="37">
    <location>
        <begin position="797"/>
        <end position="805"/>
    </location>
</feature>
<feature type="turn" evidence="37">
    <location>
        <begin position="808"/>
        <end position="811"/>
    </location>
</feature>
<feature type="helix" evidence="37">
    <location>
        <begin position="812"/>
        <end position="814"/>
    </location>
</feature>
<feature type="strand" evidence="37">
    <location>
        <begin position="816"/>
        <end position="819"/>
    </location>
</feature>
<feature type="helix" evidence="37">
    <location>
        <begin position="820"/>
        <end position="824"/>
    </location>
</feature>
<feature type="turn" evidence="38">
    <location>
        <begin position="825"/>
        <end position="828"/>
    </location>
</feature>
<feature type="strand" evidence="37">
    <location>
        <begin position="830"/>
        <end position="842"/>
    </location>
</feature>
<feature type="strand" evidence="34">
    <location>
        <begin position="844"/>
        <end position="847"/>
    </location>
</feature>
<feature type="strand" evidence="21">
    <location>
        <begin position="849"/>
        <end position="852"/>
    </location>
</feature>
<feature type="strand" evidence="34">
    <location>
        <begin position="855"/>
        <end position="857"/>
    </location>
</feature>
<feature type="helix" evidence="37">
    <location>
        <begin position="860"/>
        <end position="862"/>
    </location>
</feature>
<feature type="strand" evidence="36">
    <location>
        <begin position="863"/>
        <end position="865"/>
    </location>
</feature>
<feature type="strand" evidence="37">
    <location>
        <begin position="869"/>
        <end position="871"/>
    </location>
</feature>
<feature type="strand" evidence="26">
    <location>
        <begin position="876"/>
        <end position="878"/>
    </location>
</feature>
<feature type="strand" evidence="37">
    <location>
        <begin position="882"/>
        <end position="884"/>
    </location>
</feature>
<feature type="strand" evidence="37">
    <location>
        <begin position="886"/>
        <end position="888"/>
    </location>
</feature>
<feature type="helix" evidence="21">
    <location>
        <begin position="892"/>
        <end position="894"/>
    </location>
</feature>
<feature type="helix" evidence="38">
    <location>
        <begin position="897"/>
        <end position="906"/>
    </location>
</feature>
<feature type="turn" evidence="34">
    <location>
        <begin position="908"/>
        <end position="910"/>
    </location>
</feature>
<feature type="strand" evidence="38">
    <location>
        <begin position="912"/>
        <end position="915"/>
    </location>
</feature>
<feature type="strand" evidence="37">
    <location>
        <begin position="926"/>
        <end position="935"/>
    </location>
</feature>
<feature type="strand" evidence="44">
    <location>
        <begin position="937"/>
        <end position="939"/>
    </location>
</feature>
<feature type="helix" evidence="37">
    <location>
        <begin position="943"/>
        <end position="959"/>
    </location>
</feature>
<feature type="helix" evidence="37">
    <location>
        <begin position="962"/>
        <end position="979"/>
    </location>
</feature>
<feature type="turn" evidence="36">
    <location>
        <begin position="980"/>
        <end position="982"/>
    </location>
</feature>
<feature type="helix" evidence="37">
    <location>
        <begin position="987"/>
        <end position="990"/>
    </location>
</feature>
<feature type="strand" evidence="37">
    <location>
        <begin position="996"/>
        <end position="999"/>
    </location>
</feature>
<feature type="strand" evidence="41">
    <location>
        <begin position="1002"/>
        <end position="1005"/>
    </location>
</feature>
<feature type="helix" evidence="37">
    <location>
        <begin position="1006"/>
        <end position="1009"/>
    </location>
</feature>
<feature type="helix" evidence="37">
    <location>
        <begin position="1011"/>
        <end position="1021"/>
    </location>
</feature>
<feature type="turn" evidence="37">
    <location>
        <begin position="1022"/>
        <end position="1028"/>
    </location>
</feature>
<feature type="helix" evidence="37">
    <location>
        <begin position="1029"/>
        <end position="1037"/>
    </location>
</feature>
<feature type="turn" evidence="47">
    <location>
        <begin position="1043"/>
        <end position="1045"/>
    </location>
</feature>
<feature type="strand" evidence="37">
    <location>
        <begin position="1046"/>
        <end position="1058"/>
    </location>
</feature>
<feature type="strand" evidence="37">
    <location>
        <begin position="1065"/>
        <end position="1067"/>
    </location>
</feature>
<feature type="strand" evidence="37">
    <location>
        <begin position="1069"/>
        <end position="1071"/>
    </location>
</feature>
<feature type="strand" evidence="37">
    <location>
        <begin position="1073"/>
        <end position="1080"/>
    </location>
</feature>
<feature type="helix" evidence="37">
    <location>
        <begin position="1082"/>
        <end position="1084"/>
    </location>
</feature>
<feature type="strand" evidence="46">
    <location>
        <begin position="1089"/>
        <end position="1091"/>
    </location>
</feature>
<feature type="strand" evidence="37">
    <location>
        <begin position="1095"/>
        <end position="1098"/>
    </location>
</feature>
<feature type="helix" evidence="37">
    <location>
        <begin position="1100"/>
        <end position="1102"/>
    </location>
</feature>
<feature type="turn" evidence="37">
    <location>
        <begin position="1103"/>
        <end position="1107"/>
    </location>
</feature>
<feature type="helix" evidence="37">
    <location>
        <begin position="1110"/>
        <end position="1133"/>
    </location>
</feature>
<feature type="helix" evidence="37">
    <location>
        <begin position="1138"/>
        <end position="1150"/>
    </location>
</feature>
<feature type="strand" evidence="37">
    <location>
        <begin position="1152"/>
        <end position="1154"/>
    </location>
</feature>
<feature type="helix" evidence="37">
    <location>
        <begin position="1161"/>
        <end position="1163"/>
    </location>
</feature>
<feature type="helix" evidence="37">
    <location>
        <begin position="1166"/>
        <end position="1176"/>
    </location>
</feature>
<feature type="strand" evidence="37">
    <location>
        <begin position="1186"/>
        <end position="1188"/>
    </location>
</feature>
<feature type="helix" evidence="37">
    <location>
        <begin position="1192"/>
        <end position="1201"/>
    </location>
</feature>
<feature type="strand" evidence="35">
    <location>
        <begin position="1202"/>
        <end position="1204"/>
    </location>
</feature>
<feature type="strand" evidence="37">
    <location>
        <begin position="1208"/>
        <end position="1210"/>
    </location>
</feature>
<feature type="turn" evidence="37">
    <location>
        <begin position="1215"/>
        <end position="1217"/>
    </location>
</feature>
<feature type="strand" evidence="37">
    <location>
        <begin position="1225"/>
        <end position="1236"/>
    </location>
</feature>
<feature type="helix" evidence="37">
    <location>
        <begin position="1239"/>
        <end position="1242"/>
    </location>
</feature>
<feature type="strand" evidence="37">
    <location>
        <begin position="1244"/>
        <end position="1248"/>
    </location>
</feature>
<feature type="strand" evidence="37">
    <location>
        <begin position="1253"/>
        <end position="1255"/>
    </location>
</feature>
<feature type="turn" evidence="37">
    <location>
        <begin position="1262"/>
        <end position="1265"/>
    </location>
</feature>
<feature type="strand" evidence="38">
    <location>
        <begin position="1268"/>
        <end position="1270"/>
    </location>
</feature>
<feature type="helix" evidence="37">
    <location>
        <begin position="1272"/>
        <end position="1281"/>
    </location>
</feature>
<feature type="helix" evidence="37">
    <location>
        <begin position="1284"/>
        <end position="1291"/>
    </location>
</feature>
<feature type="helix" evidence="37">
    <location>
        <begin position="1292"/>
        <end position="1296"/>
    </location>
</feature>
<feature type="helix" evidence="37">
    <location>
        <begin position="1298"/>
        <end position="1310"/>
    </location>
</feature>
<feature type="helix" evidence="37">
    <location>
        <begin position="1321"/>
        <end position="1332"/>
    </location>
</feature>
<feature type="strand" evidence="37">
    <location>
        <begin position="1335"/>
        <end position="1339"/>
    </location>
</feature>
<comment type="function">
    <text evidence="1 8">DNA-dependent RNA polymerase (RNAP) catalyzes the transcription of DNA into RNA using the four ribonucleoside triphosphates as substrates.</text>
</comment>
<comment type="function">
    <text evidence="8 13">Resistance to the antibiotics salinamide A, salinamide B, rifampicin, streptolydigin, CBR703, myxopyronin, and lipiarmycin can result from mutations in this protein.</text>
</comment>
<comment type="function">
    <text evidence="11">Part of the processive rRNA transcription and antitermination complex (rrnTAC). The complex forms an RNA-chaperone ring around the RNA exit tunnel of RNAP. It supports rapid transcription and antitermination of rRNA operons, cotranscriptional rRNA folding, and annealing of distal rRNA regions to allow correct ribosome biogenesis.</text>
</comment>
<comment type="catalytic activity">
    <reaction>
        <text>RNA(n) + a ribonucleoside 5'-triphosphate = RNA(n+1) + diphosphate</text>
        <dbReference type="Rhea" id="RHEA:21248"/>
        <dbReference type="Rhea" id="RHEA-COMP:14527"/>
        <dbReference type="Rhea" id="RHEA-COMP:17342"/>
        <dbReference type="ChEBI" id="CHEBI:33019"/>
        <dbReference type="ChEBI" id="CHEBI:61557"/>
        <dbReference type="ChEBI" id="CHEBI:140395"/>
        <dbReference type="EC" id="2.7.7.6"/>
    </reaction>
</comment>
<comment type="subunit">
    <text evidence="1 4 8 9 11">The RNAP catalytic core consists of 2 alpha, 1 beta, 1 beta' and 1 omega subunit. When a sigma factor is associated with the core the holoenzyme is formed, which can initiate transcription. The rRNA transcription and antitermination complex (rrnTAC) consists of RNAP, NusA, NusB, NusE (rpsJ), NusG, SubB, ribosomal protein S4, DNA and precursor rRNA; S4 is more flexible than other subunits (PubMed:32871103). In pull-down experiments interacts with CedA (PubMed:28818726).</text>
</comment>
<comment type="subunit">
    <text evidence="3 10">(Microbial infection) Interacts (via flap domain) with Escherichia phage lambda antitermination protein Q; this interaction renders bacterial RNAP resistant to transcription pausing and allows it to read through termination signals.</text>
</comment>
<comment type="subunit">
    <text evidence="7">(Microbial infection) Interacts (via flap domain) with the late transcription coactivator of enterobacteria phage T4.</text>
</comment>
<comment type="interaction">
    <interactant intactId="EBI-544996">
        <id>P0A8V2</id>
    </interactant>
    <interactant intactId="EBI-551542">
        <id>P60240</id>
        <label>rapA</label>
    </interactant>
    <organismsDiffer>false</organismsDiffer>
    <experiments>5</experiments>
</comment>
<comment type="interaction">
    <interactant intactId="EBI-544996">
        <id>P0A8V2</id>
    </interactant>
    <interactant intactId="EBI-543604">
        <id>P0A8T7</id>
        <label>rpoC</label>
    </interactant>
    <organismsDiffer>false</organismsDiffer>
    <experiments>11</experiments>
</comment>
<comment type="interaction">
    <interactant intactId="EBI-544996">
        <id>P0A8V2</id>
    </interactant>
    <interactant intactId="EBI-545104">
        <id>P00579</id>
        <label>rpoD</label>
    </interactant>
    <organismsDiffer>false</organismsDiffer>
    <experiments>10</experiments>
</comment>
<comment type="interaction">
    <interactant intactId="EBI-544996">
        <id>P0A8V2</id>
    </interactant>
    <interactant intactId="EBI-557581">
        <id>P13445</id>
        <label>rpoS</label>
    </interactant>
    <organismsDiffer>false</organismsDiffer>
    <experiments>5</experiments>
</comment>
<comment type="interaction">
    <interactant intactId="EBI-544996">
        <id>P0A8V2</id>
    </interactant>
    <interactant intactId="EBI-559573">
        <id>P03018</id>
        <label>uvrD</label>
    </interactant>
    <organismsDiffer>false</organismsDiffer>
    <experiments>3</experiments>
</comment>
<comment type="interaction">
    <interactant intactId="EBI-544996">
        <id>P0A8V2</id>
    </interactant>
    <interactant intactId="EBI-15955782">
        <id>P13338</id>
        <label>33</label>
    </interactant>
    <organismsDiffer>true</organismsDiffer>
    <experiments>5</experiments>
</comment>
<comment type="interaction">
    <interactant intactId="EBI-544996">
        <id>P0A8V2</id>
    </interactant>
    <interactant intactId="EBI-2124737">
        <id>P32267</id>
        <label>asiA</label>
    </interactant>
    <organismsDiffer>true</organismsDiffer>
    <experiments>4</experiments>
</comment>
<comment type="PTM">
    <text evidence="2 6">Acetylated on several lysine residues in the presence of glucose.</text>
</comment>
<comment type="biotechnology">
    <text evidence="8">Co-administration of salinamide and rifampicin or salinamide and myxopyronin suppresses the emergence of resistance to both antibiotics.</text>
</comment>
<comment type="similarity">
    <text evidence="12">Belongs to the RNA polymerase beta chain family.</text>
</comment>
<comment type="sequence caution" evidence="12">
    <conflict type="miscellaneous discrepancy" ref="7"/>
</comment>
<organism>
    <name type="scientific">Escherichia coli (strain K12)</name>
    <dbReference type="NCBI Taxonomy" id="83333"/>
    <lineage>
        <taxon>Bacteria</taxon>
        <taxon>Pseudomonadati</taxon>
        <taxon>Pseudomonadota</taxon>
        <taxon>Gammaproteobacteria</taxon>
        <taxon>Enterobacterales</taxon>
        <taxon>Enterobacteriaceae</taxon>
        <taxon>Escherichia</taxon>
    </lineage>
</organism>
<accession>P0A8V2</accession>
<accession>P00575</accession>
<accession>P00576</accession>
<accession>P78242</accession>
<accession>Q2M8S3</accession>
<evidence type="ECO:0000269" key="1">
    <source>
    </source>
</evidence>
<evidence type="ECO:0000269" key="2">
    <source>
    </source>
</evidence>
<evidence type="ECO:0000269" key="3">
    <source>
    </source>
</evidence>
<evidence type="ECO:0000269" key="4">
    <source>
    </source>
</evidence>
<evidence type="ECO:0000269" key="5">
    <source>
    </source>
</evidence>
<evidence type="ECO:0000269" key="6">
    <source>
    </source>
</evidence>
<evidence type="ECO:0000269" key="7">
    <source>
    </source>
</evidence>
<evidence type="ECO:0000269" key="8">
    <source>
    </source>
</evidence>
<evidence type="ECO:0000269" key="9">
    <source>
    </source>
</evidence>
<evidence type="ECO:0000269" key="10">
    <source>
    </source>
</evidence>
<evidence type="ECO:0000269" key="11">
    <source>
    </source>
</evidence>
<evidence type="ECO:0000305" key="12"/>
<evidence type="ECO:0000305" key="13">
    <source>
    </source>
</evidence>
<evidence type="ECO:0007744" key="14">
    <source>
        <dbReference type="PDB" id="3IYD"/>
    </source>
</evidence>
<evidence type="ECO:0007744" key="15">
    <source>
        <dbReference type="PDB" id="3TBI"/>
    </source>
</evidence>
<evidence type="ECO:0007744" key="16">
    <source>
        <dbReference type="PDB" id="4MEX"/>
    </source>
</evidence>
<evidence type="ECO:0007744" key="17">
    <source>
        <dbReference type="PDB" id="4MEY"/>
    </source>
</evidence>
<evidence type="ECO:0007744" key="18">
    <source>
        <dbReference type="PDB" id="6TQN"/>
    </source>
</evidence>
<evidence type="ECO:0007744" key="19">
    <source>
        <dbReference type="PDB" id="6TQO"/>
    </source>
</evidence>
<evidence type="ECO:0007829" key="20">
    <source>
        <dbReference type="PDB" id="3LTI"/>
    </source>
</evidence>
<evidence type="ECO:0007829" key="21">
    <source>
        <dbReference type="PDB" id="3TBI"/>
    </source>
</evidence>
<evidence type="ECO:0007829" key="22">
    <source>
        <dbReference type="PDB" id="6N61"/>
    </source>
</evidence>
<evidence type="ECO:0007829" key="23">
    <source>
        <dbReference type="PDB" id="6PSS"/>
    </source>
</evidence>
<evidence type="ECO:0007829" key="24">
    <source>
        <dbReference type="PDB" id="6PSV"/>
    </source>
</evidence>
<evidence type="ECO:0007829" key="25">
    <source>
        <dbReference type="PDB" id="6XL5"/>
    </source>
</evidence>
<evidence type="ECO:0007829" key="26">
    <source>
        <dbReference type="PDB" id="6XL9"/>
    </source>
</evidence>
<evidence type="ECO:0007829" key="27">
    <source>
        <dbReference type="PDB" id="6XLL"/>
    </source>
</evidence>
<evidence type="ECO:0007829" key="28">
    <source>
        <dbReference type="PDB" id="6XLN"/>
    </source>
</evidence>
<evidence type="ECO:0007829" key="29">
    <source>
        <dbReference type="PDB" id="7MKJ"/>
    </source>
</evidence>
<evidence type="ECO:0007829" key="30">
    <source>
        <dbReference type="PDB" id="7QWP"/>
    </source>
</evidence>
<evidence type="ECO:0007829" key="31">
    <source>
        <dbReference type="PDB" id="7SZK"/>
    </source>
</evidence>
<evidence type="ECO:0007829" key="32">
    <source>
        <dbReference type="PDB" id="7UWE"/>
    </source>
</evidence>
<evidence type="ECO:0007829" key="33">
    <source>
        <dbReference type="PDB" id="7XUE"/>
    </source>
</evidence>
<evidence type="ECO:0007829" key="34">
    <source>
        <dbReference type="PDB" id="8F1J"/>
    </source>
</evidence>
<evidence type="ECO:0007829" key="35">
    <source>
        <dbReference type="PDB" id="8FTD"/>
    </source>
</evidence>
<evidence type="ECO:0007829" key="36">
    <source>
        <dbReference type="PDB" id="8FVR"/>
    </source>
</evidence>
<evidence type="ECO:0007829" key="37">
    <source>
        <dbReference type="PDB" id="8FVW"/>
    </source>
</evidence>
<evidence type="ECO:0007829" key="38">
    <source>
        <dbReference type="PDB" id="8HKC"/>
    </source>
</evidence>
<evidence type="ECO:0007829" key="39">
    <source>
        <dbReference type="PDB" id="8JO2"/>
    </source>
</evidence>
<evidence type="ECO:0007829" key="40">
    <source>
        <dbReference type="PDB" id="8K58"/>
    </source>
</evidence>
<evidence type="ECO:0007829" key="41">
    <source>
        <dbReference type="PDB" id="8PBL"/>
    </source>
</evidence>
<evidence type="ECO:0007829" key="42">
    <source>
        <dbReference type="PDB" id="8PIB"/>
    </source>
</evidence>
<evidence type="ECO:0007829" key="43">
    <source>
        <dbReference type="PDB" id="8SY7"/>
    </source>
</evidence>
<evidence type="ECO:0007829" key="44">
    <source>
        <dbReference type="PDB" id="8TO1"/>
    </source>
</evidence>
<evidence type="ECO:0007829" key="45">
    <source>
        <dbReference type="PDB" id="8TOM"/>
    </source>
</evidence>
<evidence type="ECO:0007829" key="46">
    <source>
        <dbReference type="PDB" id="8U3B"/>
    </source>
</evidence>
<evidence type="ECO:0007829" key="47">
    <source>
        <dbReference type="PDB" id="9GUW"/>
    </source>
</evidence>
<protein>
    <recommendedName>
        <fullName>DNA-directed RNA polymerase subunit beta</fullName>
        <shortName>RNAP subunit beta</shortName>
        <ecNumber>2.7.7.6</ecNumber>
    </recommendedName>
    <alternativeName>
        <fullName>RNA polymerase subunit beta</fullName>
    </alternativeName>
    <alternativeName>
        <fullName>Transcriptase subunit beta</fullName>
    </alternativeName>
</protein>